<organismHost>
    <name type="scientific">Bos taurus</name>
    <name type="common">Bovine</name>
    <dbReference type="NCBI Taxonomy" id="9913"/>
</organismHost>
<accession>P0C6X0</accession>
<accession>Q8V6W6</accession>
<accession>Q8V6W7</accession>
<name>R1AB_CVBQ</name>
<sequence>MSKINKYGLELHWAPEFPWMFEDAEEKLDNPSSSEVDIVCSTTAQKLETGGICPENHVMVDCRRLLKQECCVQSSLIREIVMNTRPYDLEVLLQDALQSREAVLVTPPLGMSLEACYVRGCNPNGWTMGLFRRRSVCNTGRCAVNKHVAYQLYMIDPAGVCFGAGQFVGWVIPLAFMPVQSRKFIAPWVMYLRKCGEKGAYIKDYKRGGFEHVYNFKVEDAYDLVHDEPKGKFSKKAYALIRGYRGVKPLLYVDQYGCDYTGGLADGLEAYADKTLQEMKALFPIWSQELPFDVTVAWHVVRDPRYVMRLQSASTIRSVAYVANPTEDLCDGSVVIKEPVHVYADDSIILRQHNLVDIMSCFYMEADAVVNAFYGVDLKDCGFVMQFGYIDCEQDLCDFKGWVPGNMIDGFACTTCGHVYETGDLLAQSSGVLPVNPVLHTKSAAGYGGFGCKDSFTLYGQTVVYFGGCVYWSPARNIWIPILKSSVKSYDGLVYTGVVGCKAIVKETNLICKALYLDYVQHKCGNLHQRELLGVSDVWHKQLLLNRGVYKPLLENIDYFNMRRAKFSLETFTVCADGFMPFLLDDLVPRAYYLAVSGQAFCDYAGKICHAVVSKSKELLDVSVDSLGAAIHYLNSKIVDLAQHFSDFGTSFVSKIVHFFKTFTTSTALAFAWVLFHVLHGAYIVVESDIYFGKNIPRYASAVAQAFRSGAKVGLDSLRVTFIDGLSCFKIGRRRICLSGSKIYEVERGLLHSSQLPLDVYDLTMPSQVQKTKQKGIYLKGSGSDFSLADSVVEVVTTSLTPCGYSEPPKVADKICIVDNVYMAKAGDKYYPVVVDGHVGLLDQAWRVPCAGRCVTFKEQPTVNEIASTPKTIKVFYELDKDFNTILNTACGEFEVDDTVDMEEFYAVVIDAIEEKLSPCKELEGVGAKVSAFLQKLEDNSLFLFDEAGEEVLAPKLYCAFTAPEDDDFLEESGVEEDDVEGEETDLTVTSAGEPCVASEQEESSEILEDTLDDGPCVETSDSQVEEDVQMSDFGDLESVIQDYENVCFEFYTTEPEFVKVLDLYVPKATRNNCWLRSVLAVMQKLPCQFKDKNLQDLWVLYKQQYSQLFVDTLVNKIPANIVVPQGGYVADFAYWFLTLCDWQCVAYWKCIKCDLALKLKGLDAMFFYGDVVSHVCKCGESMVLIDVDVPFTAHFALKDKLFCAFITKRSVYKAACVVDVNDSHSMAVVDGKQIDDHRITSITSDKFDFIIGHGTSFSMTTFEIAQLYGSCITPNVCFVKGDIIKVSKRVKAEVVVNPANGHMAHGGGVAKAIAVAAGQQFVKETTDMVKSKGVCATGDCYVSTGGKLCKTVLNVVGPDARTQGKQSYALLERVYKHLNKYDCVVTTLISAGIFSVPSDVSLTYLLGTAKKQVVLVSNNQEDFDLISKCQITAVEGTKKLAERLSFNVGRSIVYETDANKLILSNDVAFVSTFNVLQDVLSLRHDIALDDDARTFVQSNVDVVPEGWRVVNKFYQINGVRPVKYFECPGGIDICSQDKVFGYVQQGSFNKATVAQIKALFLDKVDILLTVDGVNFTNRFVPVGESFGKSLGNVFCDGVNVTKHKCDINYKGKVFFQFDNLSSEDLKAVRSSFNFDQKELLAYYNMLVNCSKWQVVFNGKYFTFKQANNNCFVNVSCLMLQSLNLKFKIVQWQEAWLEFRSGRPARFVSLVLAKGGFKFGDPADSRDFLRVVFSQVDLTGAICDFEIACKCGVKQEQRTGVDAVMHFGTLSREDLEIGYTVDCSCGKKLIHCVRFDVPFLICSNTPASVKLPKGVGSANIFKGDKVGHYVHVKCEQSYQLYDASNVKKVTDVTGNLSDCLYLKNLKQTFKSVLTTYYLDDVKKIEYKPDLSQYYCDGGKYYTQRIIKAQFKTFEKVDGVYTNFKLIGHTVCDILNAKLGFDSSKEFVEYKVTEWPTATGDVVLATDDLYVKRYERGCITFGKPVIWLSHEQASLNSLTYFNRPLLVDENKFDVLKVDDVDDGGDISESDAKEPKEINIIKLSGVKKPFKVEDSVIVNDDTSEIKYVKSLSIVDVYDMWLTGCRCVVRTANALSRAVNVPTIRKFIKFGMTLVSIPIDLLNLREIKPVFNVVKAVRNKISACFNFIKWLFVLLFGWIKISADNKVIYTTEVASKLTCKLVALAFKNAFLTFKWSVVARGACIIATIFLLWFNFIYANVIFSDFYLPKIGFLPTFVGKIVQWIKNTFSLVTICDLYSIQDVGFKNQYCNGSIACQFCLAGFDMLDNYKAIDVVQYEADRRAFVDYTGVLKIVIELIVSYALYTAWFYPLFALISIQILTTWLPELLMLSTLHWSVRLLVSLANMLPAHVFMRFYIIIASFIKLFSLFRHVAYGCSKSGCLFCYKRNRSLRVKCSTIVGGMIRYYDVMANGGTGFCSKHQWNCIDCDSYKPGNTFITVEAALDLSKELKRPIQPTDVAYHTVTDVKQVGCYMRLFYDRDGQRTYDDVNASLFVDYSNLLHSKVKSVPNMHVVVVENDADKANFLNAAVFYAQSLFRPILMVDKILITTANTGTSVTETMFDVYVDTFLSMFDVDKKSLNALIATAHSSIKQGTQICKVLDTFLSCARKSCSIDSDVDTKCLADSVMSAVSAGLELTDESCNNLVPTYLKGDNIVAADLGVLIQNSAKHVQGNVAKIAGVSCIWSVDAFNQLSSDFQHKLKKACCKTGLKLELTYNKQMANVSVLTTPFSLKGGAVFSYFVYVCFVLSLVCFIGLWCLMPTYTVHKSDFQLPVYASYKVLDNGVIRDVSVEDVCFANKFEQFDQWYESTFGLSYYSNSMACPIVVAVVDQDFGSTVFNVPTKVLRYGYHVLHFITHALSADGVQCYTPHSQISYSNFYASGCVLSSACTMFAMADGSPQPYCYTDGLMQNASLYSSLVPHVRYNLANAKGFIRLPEVLREGLVRIVRTRSMSYCRVGLCEEADEGICFNFNGSWVLNNDYYRSLPGTFCGRDVFDLIYQLFKGLAQPVDFLALTASSIAGAILAVIVVLGFYYLIKLKRAFGDYTSIVFVNVIVWCVNFMMLFVFQVYPTLSCVYAICYFYATLYFPSEISVIMHLQWLVMYGTIMPLWFCLLYISVVVSNHAFWVFSYCRQLGTSVRSDGTFEEMALTTFMITKDSYCKLKNSLSDVAFNRYLSLYNKYRYYSGKMDTAAYREAACSQLAKAMDTFTNNNGSDVLYQPPTASVSTSFLQSGIVKMVNPTSKVEPCIVSVTYGNMTLNGLWLDDKVYCPRHVICSASDMTNPDYTNLLCRVTSSDFTVLFDRLSLTVMSYQMQGCMLVLTVTLQNSRTPKYTFGVVKPGETFTVLAAYNGKPQGAFHVTMRSSYTIKGSFLCGSCGSVGYVIMGDCVKFVYMHQLELSTGCHTGTDFNGDFYGPYKDAQVVQLPVQDYIQSVNFVAWLYAAILNNCNWFVQSDKCSVEDFNVWALSNGFSQVKSDLVIDALASMTGVSLETLLAAIKRLKNGFQGRQIMGSCSFEDELTPSDVYQQLAGIKLQSKRTRLVKGIVCWIMASTFLFSCIITAFVKWTMFMYVTTNMLSITFCALCVISLAMLLVKHKHLYLTMYIIPVLFTLLYNNYLVVYKQTFRGYVYAWLSYYVPSVEYTYTDEVIYGMLLLIGMVFVTLRSINHDLFSFIMFVGRVISVVSLWYMGSNLEEEILLMLASLFGTYTWTTALSMAAAKVIAKWVAVNVLYFTDIPQIKIVLVCYLFIGYIISCYWGLFSLMNSLFRMPLGVYNYKISVQELRYMNANGLRPPKNSFEALMLNFKLLGIGGVPIIEVSQFQSKLTDVKCANGGLLNCLQHLHVASNSKLWQYCSTLHNEILATSDLGVAFEKLAQLLIVLFANPAAVDSKCLTSIEEVCDDYAKDNTVLQALQSEFVNMASFVEYEVAKKNLDEACSSGSANQQQLKQLEKACNIAKSAYERDRAVARKLERMADLALTNMYKEARINDKKSKVVSALQTMLFSMVRKLDNQALNSILDNAVKGCVPLNAIPSLAANTLTIIVPDKSVYDQVVDNVYVTYAGNVWQIQTIQDSDGTNKQLHEISDDCNWPLVIIANRHNEVSATVLQNNELMPAKLKTQVVNSGPDQTCNTPTQCYYNNSYNGKIVYAILSDVDGLKYTKILKDDGNFVVLELDPPCKFTVQDVKGLKIKYLYFVKGCNTLARGWVVGTISSTVRLQAGTATEYASNSSILSLCAFSVDPKKTYLDFIQQGGTPIANCVKMLCDHAGTGMAITVKPDATTSQDSYGGASVCIYCRARVEHPDVDGLCKLRGKFVQVPVGIKDPVSYVLTHDVCQVCGFWRDGSCSCVSTDTTVQSKDTNFLNRVRGTSVDARLVPCASGLSTDVQLRAFDICNASVAGIGLHLKVNCCRFQRVDENGDKLDQFFVVKRTDLTIYNREMECYERVKDCKFVAEHDFFTFDVEGSRVPHIVRKDLTKYTMLDLCYALRHFDRNDCMLLCDILSIYAGCEQSYFTKKDWYDFVENPDIINVYKKLGPIFNRALVSATEFADKLVEVGLVGILTLDNQDLNGKWYDFGDYVIAAPGCGVAIADSYYSYMMPMLTMCHALDCELYVNNAYRLFDLVQYDFTDYKLELFNKYFKHWSMPYHPNTVDCQDDRCIIHCANFNILFSMVLPNTCFGPLVRQIFVDGVPFVVSIGYHYKELGIVMNMDVDTHRYRLSLKDLLLYAADPALHVASASALYDLRTCCFSVAAITSGVKFQTVKPGNFNQDFYDFILSKGLLKEGSSVDLKHFFFTQDGNAAITDYNYYKYNLPTMVDIKQLLFVLEVVYKYFEIYDGGCIPAAQVIVNNYDKSAGYPFNKFGKARLYYEALSFEEQDEIYAYTKRNVLPTLTQMNLKYAISAKNRARTVAGVSILSTMTGRMFHQKCLKSIAATRGVPVVIGTTKFYGGWDDMLRRLIKDVDNPVLMGWDYPKCDRAMPNILRIVSSLVLARKHEACCSQSDRFYRLANECAQVLSEIVMCGGCYYVKPGGTSSGDATTAFANSVFNICQAVSANVCALMSCNGNKIEDLSIRALQKRLYSHVYRSDMVDSTFVTEYYEFLNKHFSMMILSDDGVVCYNSDYASKGYIANISAFQQVLYYQNNVFMSESKCWVENDINNGPHEFCSQHTMLVKMDGDDVYLPYPVPSRILGAGCFVDDLLKTDSVLLIERFVSLAIDAYPLVYHENEEYQKVFRVYLEYIKKLYNELGNQILDSYSVILSTCDGQKFTDESFYKNMYLRSAVMQSVGACVVCSSQTSLRCGSCIRKPLLCCKCCYDHVMATDHKYVLSVSPYVCNAPGCDVNDVTKLYLGGMSYYCEDHKPQYSFKLVMNGMVFGLYKQSCTGSPYIDDFNRIASCKWTDVDDYILANECTERLKLFAAETQKATEEAFKQSYASATIQEIVSERELILSWEIGKVKPPLNKNYVFTGYHFTKNGKTVLGEYVFDKSELTNGVYYRATTTYKLSVGDVFVLTSHSVANLSAPTLVPQENYSSIRFASVYSVLETFQNNVVNYQHIGMKRYCTVQGPPGTGKSHLAIGLAVYYCTARVVYTAASHAAVDALCEKAYKFLNINDCTRIVPAKVRVECYDKFKINDTTRKYVFTTINALPEMVTDIVVVDEVSMLTNYELSVINARIRAKHYVYIGDPAQLPAPRVLLSKGTLEPKYFNTVTKLMCCLGPDIFLGTCYRCPKEIVDTVSALVYENKLKAKNESSSLCFKVYYKGVTTHESSSAVNMQQIYLINKFLKANPLWHKAVFISPYNSQNFAAKRVLGLQTQTVDSAQGSEYDYVIYSQTAETAHSVNVNRFNVAITRAKKGILCVMSNMQLFEALQFTTLTVDKVPQAVETRVQCSTNLFKDCSKSYSGYHPAHAPSFLAVDDKYKATGDLAVCLGIGDSAVTYSRLISLMGFKLDVTLDGYCKLFITKEEAVKRVRAWVGFDAEGAHATRDSIGTNFPLQLGFSTGIDFVVEATGLFADRDGYSFKKAVAKAPPGEQFKHLIPLMTRGQRWDVVRPRIVQMFADHLIDLSDCVVLVTWAANFELTCLRYFAKVGREISCNVSTKRATAYNSRTGYYGCWRHSVTCDYLYNPLIVDIQQWGYIGSLSSNHDLYCSVHKGAHVASSDAIMTRCLAVYDCFCNNINWNVEYPIISNELSINTSCRVLQRVMLKAAMLCNRYTLCYDIGNPKAIACVKDFDFKFYDAQPIVKSVKTLLYFFEAHKDSFKDGLCMFWNCNVDKYPPNAVVCRFDTRVLNNLNLPGCNGGSLYVNKHAFHTKPFSRAAFEHLKPMPFFYYSDTPCVYMDGMDAKQVDYVPLKSATCITRCNLGGAVCLKHAEEYREYLESYNTATTAGFTFWVYKTFDFYNLWNTFTKLQSLENVVYNLVKTGHYTGQAGEMPCAIINDKVVAKIDKEDVVIFINNTTYPTNVAVELFAKRSIRHHPELKLFRNLNIDVCWKHVIWDYARESIFCSNTYGVCMYTDLKLIDKLNVLFDGRDNGALEAFKRSNNGVYISTTKVKSLSMIRGPPRAELNGVVVDKVGDTDCVFYFAVRKEGQDVIFSQFDSLRVSSNQSPQGNLGSNEPGNVGGNDALATSTIFTQSRVISSFTCRTDMEKDFIALDQDVFIQKYGLEDYAFEHIVYGNFNQKIIGGLHLLIGLYRRQQTSNLVIQEFVSYDSSIHSYFITDEKSGGSKSVCTVIDILLDDFVALVKSLNLNCVSKVVNVNVDFKDFQFMLWCNDEKVMTFYPRLQAASDWKPGYSMPVLYKYLNSPMERVSLWNYGKPVTLPTGCMMNVAKYTQLCQYLNTTTLAVPVNTRVLHLGAGSEKGVAPGSAVLRQWLPAGTILRQWLPAGTILVHNDLYPFVSDSVATYFGDCITLPFDCQWDLIISDMYDLLLDIGVHVVRCSYIHCHMIRDKLALGGSVAIKITEFSWNAELYKLMGYFAFWTVFCTNANASSSEGFLIGINYLGKPKVEIDGNVMHAIICFGEIPQFGTGVLIACLIWLNSRLSWLVMP</sequence>
<feature type="chain" id="PRO_0000037274" description="Host translation inhibitor nsp1" evidence="2">
    <location>
        <begin position="1"/>
        <end position="246"/>
    </location>
</feature>
<feature type="chain" id="PRO_0000037275" description="Non-structural protein 2" evidence="2">
    <location>
        <begin position="247"/>
        <end position="851"/>
    </location>
</feature>
<feature type="chain" id="PRO_0000037276" description="Papain-like proteinase nsp3" evidence="2">
    <location>
        <begin position="852"/>
        <end position="2750"/>
    </location>
</feature>
<feature type="chain" id="PRO_0000037277" description="Non-structural protein 4" evidence="2">
    <location>
        <begin position="2751"/>
        <end position="3246"/>
    </location>
</feature>
<feature type="chain" id="PRO_0000037278" description="3C-like proteinase nsp5" evidence="2">
    <location>
        <begin position="3247"/>
        <end position="3549"/>
    </location>
</feature>
<feature type="chain" id="PRO_0000037279" description="Non-structural protein 6" evidence="2">
    <location>
        <begin position="3550"/>
        <end position="3836"/>
    </location>
</feature>
<feature type="chain" id="PRO_0000037280" description="Non-structural protein 7" evidence="2">
    <location>
        <begin position="3837"/>
        <end position="3925"/>
    </location>
</feature>
<feature type="chain" id="PRO_0000037281" description="Non-structural protein 8" evidence="2">
    <location>
        <begin position="3926"/>
        <end position="4122"/>
    </location>
</feature>
<feature type="chain" id="PRO_0000037282" description="Viral protein genome-linked nsp9" evidence="2">
    <location>
        <begin position="4123"/>
        <end position="4232"/>
    </location>
</feature>
<feature type="chain" id="PRO_0000037283" description="Non-structural protein 10" evidence="2">
    <location>
        <begin position="4233"/>
        <end position="4369"/>
    </location>
</feature>
<feature type="chain" id="PRO_0000037284" description="RNA-directed RNA polymerase nsp12" evidence="2">
    <location>
        <begin position="4370"/>
        <end position="5297"/>
    </location>
</feature>
<feature type="chain" id="PRO_0000037285" description="Helicase nsp13" evidence="2">
    <location>
        <begin position="5298"/>
        <end position="5900"/>
    </location>
</feature>
<feature type="chain" id="PRO_0000037286" description="Guanine-N7 methyltransferase nsp14" evidence="2">
    <location>
        <begin position="5901"/>
        <end position="6421"/>
    </location>
</feature>
<feature type="chain" id="PRO_0000037287" description="Uridylate-specific endoribonuclease nsp15" evidence="2">
    <location>
        <begin position="6422"/>
        <end position="6795"/>
    </location>
</feature>
<feature type="chain" id="PRO_0000037288" description="2'-O-methyltransferase nsp16" evidence="2">
    <location>
        <begin position="6796"/>
        <end position="7059"/>
    </location>
</feature>
<feature type="transmembrane region" description="Helical" evidence="4">
    <location>
        <begin position="2138"/>
        <end position="2158"/>
    </location>
</feature>
<feature type="transmembrane region" description="Helical" evidence="4">
    <location>
        <begin position="2199"/>
        <end position="2219"/>
    </location>
</feature>
<feature type="transmembrane region" description="Helical" evidence="4">
    <location>
        <begin position="2221"/>
        <end position="2241"/>
    </location>
</feature>
<feature type="transmembrane region" description="Helical" evidence="4">
    <location>
        <begin position="2313"/>
        <end position="2333"/>
    </location>
</feature>
<feature type="transmembrane region" description="Helical" evidence="4">
    <location>
        <begin position="2343"/>
        <end position="2363"/>
    </location>
</feature>
<feature type="transmembrane region" description="Helical" evidence="4">
    <location>
        <begin position="2365"/>
        <end position="2385"/>
    </location>
</feature>
<feature type="transmembrane region" description="Helical" evidence="4">
    <location>
        <begin position="2752"/>
        <end position="2772"/>
    </location>
</feature>
<feature type="transmembrane region" description="Helical" evidence="4">
    <location>
        <begin position="2824"/>
        <end position="2844"/>
    </location>
</feature>
<feature type="transmembrane region" description="Helical" evidence="4">
    <location>
        <begin position="3009"/>
        <end position="3029"/>
    </location>
</feature>
<feature type="transmembrane region" description="Helical" evidence="4">
    <location>
        <begin position="3031"/>
        <end position="3051"/>
    </location>
</feature>
<feature type="transmembrane region" description="Helical" evidence="4">
    <location>
        <begin position="3063"/>
        <end position="3083"/>
    </location>
</feature>
<feature type="transmembrane region" description="Helical" evidence="4">
    <location>
        <begin position="3090"/>
        <end position="3110"/>
    </location>
</feature>
<feature type="transmembrane region" description="Helical" evidence="4">
    <location>
        <begin position="3115"/>
        <end position="3135"/>
    </location>
</feature>
<feature type="transmembrane region" description="Helical" evidence="4">
    <location>
        <begin position="3558"/>
        <end position="3578"/>
    </location>
</feature>
<feature type="transmembrane region" description="Helical" evidence="4">
    <location>
        <begin position="3588"/>
        <end position="3608"/>
    </location>
</feature>
<feature type="transmembrane region" description="Helical" evidence="4">
    <location>
        <begin position="3615"/>
        <end position="3635"/>
    </location>
</feature>
<feature type="transmembrane region" description="Helical" evidence="4">
    <location>
        <begin position="3657"/>
        <end position="3677"/>
    </location>
</feature>
<feature type="transmembrane region" description="Helical" evidence="4">
    <location>
        <begin position="3684"/>
        <end position="3704"/>
    </location>
</feature>
<feature type="transmembrane region" description="Helical" evidence="4">
    <location>
        <begin position="3711"/>
        <end position="3731"/>
    </location>
</feature>
<feature type="transmembrane region" description="Helical" evidence="4">
    <location>
        <begin position="3755"/>
        <end position="3775"/>
    </location>
</feature>
<feature type="domain" description="CoV Nsp1 globular" evidence="26">
    <location>
        <begin position="54"/>
        <end position="196"/>
    </location>
</feature>
<feature type="domain" description="BetaCoV Nsp1 C-terminal" evidence="27">
    <location>
        <begin position="216"/>
        <end position="246"/>
    </location>
</feature>
<feature type="domain" description="CoV Nsp2 N-terminal" evidence="28">
    <location>
        <begin position="250"/>
        <end position="519"/>
    </location>
</feature>
<feature type="domain" description="CoV Nsp2 middle" evidence="29">
    <location>
        <begin position="524"/>
        <end position="713"/>
    </location>
</feature>
<feature type="domain" description="CoV Nsp2 C-terminal" evidence="30">
    <location>
        <begin position="733"/>
        <end position="851"/>
    </location>
</feature>
<feature type="domain" description="Ubiquitin-like 1" evidence="5">
    <location>
        <begin position="853"/>
        <end position="966"/>
    </location>
</feature>
<feature type="domain" description="Peptidase C16 1" evidence="6">
    <location>
        <begin position="1036"/>
        <end position="1274"/>
    </location>
</feature>
<feature type="domain" description="Macro" evidence="7">
    <location>
        <begin position="1275"/>
        <end position="1435"/>
    </location>
</feature>
<feature type="domain" description="DPUP" evidence="11">
    <location>
        <begin position="1491"/>
        <end position="1563"/>
    </location>
</feature>
<feature type="domain" description="Ubiquitin-like 2" evidence="5">
    <location>
        <begin position="1562"/>
        <end position="1617"/>
    </location>
</feature>
<feature type="domain" description="Peptidase C16 2" evidence="6">
    <location>
        <begin position="1631"/>
        <end position="1892"/>
    </location>
</feature>
<feature type="domain" description="Nucleic acid-binding" evidence="12">
    <location>
        <begin position="1906"/>
        <end position="2007"/>
    </location>
</feature>
<feature type="domain" description="G2M" evidence="33">
    <location>
        <begin position="2020"/>
        <end position="2169"/>
    </location>
</feature>
<feature type="domain" description="3Ecto" evidence="32">
    <location>
        <begin position="2235"/>
        <end position="2296"/>
    </location>
</feature>
<feature type="domain" description="CoV Nsp3 Y" evidence="31">
    <location>
        <begin position="2383"/>
        <end position="2750"/>
    </location>
</feature>
<feature type="domain" description="Nsp4C" evidence="13">
    <location>
        <begin position="3149"/>
        <end position="3246"/>
    </location>
</feature>
<feature type="domain" description="Peptidase C30" evidence="9">
    <location>
        <begin position="3247"/>
        <end position="3549"/>
    </location>
</feature>
<feature type="domain" description="RdRp Nsp7 cofactor" evidence="16">
    <location>
        <begin position="3837"/>
        <end position="3925"/>
    </location>
</feature>
<feature type="domain" description="RdRp Nsp8 cofactor" evidence="17">
    <location>
        <begin position="3926"/>
        <end position="4122"/>
    </location>
</feature>
<feature type="domain" description="Nsp9 ssRNA-binding" evidence="18">
    <location>
        <begin position="4123"/>
        <end position="4232"/>
    </location>
</feature>
<feature type="domain" description="ExoN/MTase coactivator" evidence="19">
    <location>
        <begin position="4233"/>
        <end position="4370"/>
    </location>
</feature>
<feature type="domain" description="NiRAN" evidence="14">
    <location>
        <begin position="4375"/>
        <end position="4630"/>
    </location>
</feature>
<feature type="domain" description="Nsp12 Interface" evidence="34">
    <location>
        <begin position="4631"/>
        <end position="4729"/>
    </location>
</feature>
<feature type="domain" description="Nsp12 RNA-dependent RNA polymerase" evidence="15">
    <location>
        <begin position="4730"/>
        <end position="5297"/>
    </location>
</feature>
<feature type="domain" description="RdRp catalytic" evidence="8">
    <location>
        <begin position="4977"/>
        <end position="5139"/>
    </location>
</feature>
<feature type="domain" description="CV ZBD" evidence="10">
    <location>
        <begin position="5298"/>
        <end position="5410"/>
    </location>
</feature>
<feature type="domain" description="(+)RNA virus helicase ATP-binding">
    <location>
        <begin position="5553"/>
        <end position="5734"/>
    </location>
</feature>
<feature type="domain" description="(+)RNA virus helicase C-terminal">
    <location>
        <begin position="5735"/>
        <end position="5904"/>
    </location>
</feature>
<feature type="domain" description="ExoN" evidence="20">
    <location>
        <begin position="5971"/>
        <end position="6186"/>
    </location>
</feature>
<feature type="domain" description="N7-MTase" evidence="21">
    <location>
        <begin position="6195"/>
        <end position="6421"/>
    </location>
</feature>
<feature type="domain" description="Nsp15 N-terminal oligomerization" evidence="24">
    <location>
        <begin position="6422"/>
        <end position="6482"/>
    </location>
</feature>
<feature type="domain" description="AV-Nsp11N/CoV-Nsp15M" evidence="25">
    <location>
        <begin position="6483"/>
        <end position="6603"/>
    </location>
</feature>
<feature type="domain" description="NendoU" evidence="23">
    <location>
        <begin position="6653"/>
        <end position="6792"/>
    </location>
</feature>
<feature type="domain" description="Nidovirus-type SAM-dependent 2'-O-MTase" evidence="22">
    <location>
        <begin position="6797"/>
        <end position="7059"/>
    </location>
</feature>
<feature type="zinc finger region" description="C4-type 1" evidence="6">
    <location>
        <begin position="1151"/>
        <end position="1179"/>
    </location>
</feature>
<feature type="zinc finger region" description="C4-type 2" evidence="6">
    <location>
        <begin position="1749"/>
        <end position="1785"/>
    </location>
</feature>
<feature type="zinc finger region" evidence="1">
    <location>
        <begin position="4306"/>
        <end position="4322"/>
    </location>
</feature>
<feature type="zinc finger region" evidence="1">
    <location>
        <begin position="4348"/>
        <end position="4361"/>
    </location>
</feature>
<feature type="region of interest" description="C4" evidence="28">
    <location>
        <begin position="392"/>
        <end position="416"/>
    </location>
</feature>
<feature type="region of interest" description="Disordered" evidence="35">
    <location>
        <begin position="972"/>
        <end position="1000"/>
    </location>
</feature>
<feature type="region of interest" description="HD1">
    <location>
        <begin position="2138"/>
        <end position="2385"/>
    </location>
</feature>
<feature type="region of interest" description="Y1" evidence="31">
    <location>
        <begin position="2383"/>
        <end position="2473"/>
    </location>
</feature>
<feature type="region of interest" description="ZF1" evidence="31">
    <location>
        <begin position="2387"/>
        <end position="2400"/>
    </location>
</feature>
<feature type="region of interest" description="ZF2" evidence="31">
    <location>
        <begin position="2433"/>
        <end position="2443"/>
    </location>
</feature>
<feature type="region of interest" description="CoV-Y" evidence="31">
    <location>
        <begin position="2474"/>
        <end position="2750"/>
    </location>
</feature>
<feature type="region of interest" description="Y2" evidence="31">
    <location>
        <begin position="2474"/>
        <end position="2566"/>
    </location>
</feature>
<feature type="region of interest" description="Y3" evidence="31">
    <location>
        <begin position="2567"/>
        <end position="2649"/>
    </location>
</feature>
<feature type="region of interest" description="Y4" evidence="31">
    <location>
        <begin position="2650"/>
        <end position="2750"/>
    </location>
</feature>
<feature type="region of interest" description="HD2">
    <location>
        <begin position="2752"/>
        <end position="3135"/>
    </location>
</feature>
<feature type="region of interest" description="HD3">
    <location>
        <begin position="3319"/>
        <end position="3775"/>
    </location>
</feature>
<feature type="region of interest" description="RdRp Fingers N-ter" evidence="15">
    <location>
        <begin position="4732"/>
        <end position="4946"/>
    </location>
</feature>
<feature type="region of interest" description="RdRp Palm N-ter" evidence="15">
    <location>
        <begin position="4947"/>
        <end position="4985"/>
    </location>
</feature>
<feature type="region of interest" description="RdRp Fingers C-ter" evidence="15">
    <location>
        <begin position="4986"/>
        <end position="5044"/>
    </location>
</feature>
<feature type="region of interest" description="RdRp Palm C-ter" evidence="15">
    <location>
        <begin position="5045"/>
        <end position="5180"/>
    </location>
</feature>
<feature type="region of interest" description="RdRp Thumb" evidence="15">
    <location>
        <begin position="5181"/>
        <end position="5297"/>
    </location>
</feature>
<feature type="region of interest" description="GpppA-binding" evidence="21">
    <location>
        <begin position="6308"/>
        <end position="6322"/>
    </location>
</feature>
<feature type="compositionally biased region" description="Acidic residues" evidence="35">
    <location>
        <begin position="972"/>
        <end position="986"/>
    </location>
</feature>
<feature type="active site" description="For PL1-PRO activity" evidence="6">
    <location>
        <position position="1074"/>
    </location>
</feature>
<feature type="active site" description="For PL1-PRO activity" evidence="6">
    <location>
        <position position="1225"/>
    </location>
</feature>
<feature type="active site" description="For PL1-PRO activity" evidence="6">
    <location>
        <position position="1236"/>
    </location>
</feature>
<feature type="active site" description="For PL2-PRO activity" evidence="6">
    <location>
        <position position="1671"/>
    </location>
</feature>
<feature type="active site" description="For PL2-PRO activity" evidence="6">
    <location>
        <position position="1828"/>
    </location>
</feature>
<feature type="active site" description="For PL2-PRO activity" evidence="6">
    <location>
        <position position="1842"/>
    </location>
</feature>
<feature type="active site" description="For 3CL-PRO activity" evidence="9">
    <location>
        <position position="3287"/>
    </location>
</feature>
<feature type="active site" description="For 3CL-PRO activity" evidence="9">
    <location>
        <position position="3391"/>
    </location>
</feature>
<feature type="active site" evidence="15">
    <location>
        <position position="5124"/>
    </location>
</feature>
<feature type="active site" evidence="15">
    <location>
        <position position="5125"/>
    </location>
</feature>
<feature type="active site" evidence="15">
    <location>
        <position position="5126"/>
    </location>
</feature>
<feature type="active site" evidence="20">
    <location>
        <position position="5989"/>
    </location>
</feature>
<feature type="active site" evidence="20">
    <location>
        <position position="5991"/>
    </location>
</feature>
<feature type="active site" evidence="20">
    <location>
        <position position="6090"/>
    </location>
</feature>
<feature type="active site" evidence="20">
    <location>
        <position position="6167"/>
    </location>
</feature>
<feature type="active site" evidence="20">
    <location>
        <position position="6172"/>
    </location>
</feature>
<feature type="active site" evidence="23">
    <location>
        <position position="6683"/>
    </location>
</feature>
<feature type="active site" evidence="23">
    <location>
        <position position="6698"/>
    </location>
</feature>
<feature type="active site" evidence="23">
    <location>
        <position position="6738"/>
    </location>
</feature>
<feature type="active site" evidence="22">
    <location>
        <position position="6841"/>
    </location>
</feature>
<feature type="active site" evidence="22">
    <location>
        <position position="6935"/>
    </location>
</feature>
<feature type="active site" evidence="22">
    <location>
        <position position="6971"/>
    </location>
</feature>
<feature type="active site" evidence="22">
    <location>
        <position position="7004"/>
    </location>
</feature>
<feature type="binding site" evidence="28">
    <location>
        <position position="392"/>
    </location>
    <ligand>
        <name>Zn(2+)</name>
        <dbReference type="ChEBI" id="CHEBI:29105"/>
        <label>1</label>
    </ligand>
</feature>
<feature type="binding site" evidence="28">
    <location>
        <position position="397"/>
    </location>
    <ligand>
        <name>Zn(2+)</name>
        <dbReference type="ChEBI" id="CHEBI:29105"/>
        <label>1</label>
    </ligand>
</feature>
<feature type="binding site" evidence="28">
    <location>
        <position position="413"/>
    </location>
    <ligand>
        <name>Zn(2+)</name>
        <dbReference type="ChEBI" id="CHEBI:29105"/>
        <label>1</label>
    </ligand>
</feature>
<feature type="binding site" evidence="28">
    <location>
        <position position="416"/>
    </location>
    <ligand>
        <name>Zn(2+)</name>
        <dbReference type="ChEBI" id="CHEBI:29105"/>
        <label>1</label>
    </ligand>
</feature>
<feature type="binding site" evidence="6">
    <location>
        <position position="1151"/>
    </location>
    <ligand>
        <name>Zn(2+)</name>
        <dbReference type="ChEBI" id="CHEBI:29105"/>
        <label>2</label>
    </ligand>
</feature>
<feature type="binding site" evidence="6">
    <location>
        <position position="1154"/>
    </location>
    <ligand>
        <name>Zn(2+)</name>
        <dbReference type="ChEBI" id="CHEBI:29105"/>
        <label>2</label>
    </ligand>
</feature>
<feature type="binding site" evidence="6">
    <location>
        <position position="1177"/>
    </location>
    <ligand>
        <name>Zn(2+)</name>
        <dbReference type="ChEBI" id="CHEBI:29105"/>
        <label>2</label>
    </ligand>
</feature>
<feature type="binding site" evidence="6">
    <location>
        <position position="1179"/>
    </location>
    <ligand>
        <name>Zn(2+)</name>
        <dbReference type="ChEBI" id="CHEBI:29105"/>
        <label>2</label>
    </ligand>
</feature>
<feature type="binding site" evidence="6">
    <location>
        <position position="1749"/>
    </location>
    <ligand>
        <name>Zn(2+)</name>
        <dbReference type="ChEBI" id="CHEBI:29105"/>
        <label>3</label>
    </ligand>
</feature>
<feature type="binding site" evidence="6">
    <location>
        <position position="1751"/>
    </location>
    <ligand>
        <name>Zn(2+)</name>
        <dbReference type="ChEBI" id="CHEBI:29105"/>
        <label>3</label>
    </ligand>
</feature>
<feature type="binding site" evidence="6">
    <location>
        <position position="1783"/>
    </location>
    <ligand>
        <name>Zn(2+)</name>
        <dbReference type="ChEBI" id="CHEBI:29105"/>
        <label>3</label>
    </ligand>
</feature>
<feature type="binding site" evidence="6">
    <location>
        <position position="1785"/>
    </location>
    <ligand>
        <name>Zn(2+)</name>
        <dbReference type="ChEBI" id="CHEBI:29105"/>
        <label>3</label>
    </ligand>
</feature>
<feature type="binding site" evidence="31">
    <location>
        <position position="2387"/>
    </location>
    <ligand>
        <name>Zn(2+)</name>
        <dbReference type="ChEBI" id="CHEBI:29105"/>
        <label>4</label>
    </ligand>
</feature>
<feature type="binding site" evidence="31">
    <location>
        <position position="2392"/>
    </location>
    <ligand>
        <name>Zn(2+)</name>
        <dbReference type="ChEBI" id="CHEBI:29105"/>
        <label>4</label>
    </ligand>
</feature>
<feature type="binding site" evidence="31">
    <location>
        <position position="2397"/>
    </location>
    <ligand>
        <name>Zn(2+)</name>
        <dbReference type="ChEBI" id="CHEBI:29105"/>
        <label>4</label>
    </ligand>
</feature>
<feature type="binding site" evidence="31">
    <location>
        <position position="2400"/>
    </location>
    <ligand>
        <name>Zn(2+)</name>
        <dbReference type="ChEBI" id="CHEBI:29105"/>
        <label>4</label>
    </ligand>
</feature>
<feature type="binding site" evidence="31">
    <location>
        <position position="2433"/>
    </location>
    <ligand>
        <name>Zn(2+)</name>
        <dbReference type="ChEBI" id="CHEBI:29105"/>
        <label>5</label>
    </ligand>
</feature>
<feature type="binding site" evidence="31">
    <location>
        <position position="2436"/>
    </location>
    <ligand>
        <name>Zn(2+)</name>
        <dbReference type="ChEBI" id="CHEBI:29105"/>
        <label>5</label>
    </ligand>
</feature>
<feature type="binding site" evidence="31">
    <location>
        <position position="2440"/>
    </location>
    <ligand>
        <name>Zn(2+)</name>
        <dbReference type="ChEBI" id="CHEBI:29105"/>
        <label>5</label>
    </ligand>
</feature>
<feature type="binding site" evidence="31">
    <location>
        <position position="2443"/>
    </location>
    <ligand>
        <name>Zn(2+)</name>
        <dbReference type="ChEBI" id="CHEBI:29105"/>
        <label>5</label>
    </ligand>
</feature>
<feature type="binding site" evidence="19">
    <location>
        <position position="4306"/>
    </location>
    <ligand>
        <name>Zn(2+)</name>
        <dbReference type="ChEBI" id="CHEBI:29105"/>
        <label>6</label>
    </ligand>
</feature>
<feature type="binding site" evidence="19">
    <location>
        <position position="4309"/>
    </location>
    <ligand>
        <name>Zn(2+)</name>
        <dbReference type="ChEBI" id="CHEBI:29105"/>
        <label>6</label>
    </ligand>
</feature>
<feature type="binding site" evidence="19">
    <location>
        <position position="4315"/>
    </location>
    <ligand>
        <name>Zn(2+)</name>
        <dbReference type="ChEBI" id="CHEBI:29105"/>
        <label>6</label>
    </ligand>
</feature>
<feature type="binding site" evidence="19">
    <location>
        <position position="4322"/>
    </location>
    <ligand>
        <name>Zn(2+)</name>
        <dbReference type="ChEBI" id="CHEBI:29105"/>
        <label>6</label>
    </ligand>
</feature>
<feature type="binding site" evidence="19">
    <location>
        <position position="4348"/>
    </location>
    <ligand>
        <name>Zn(2+)</name>
        <dbReference type="ChEBI" id="CHEBI:29105"/>
        <label>7</label>
    </ligand>
</feature>
<feature type="binding site" evidence="19">
    <location>
        <position position="4351"/>
    </location>
    <ligand>
        <name>Zn(2+)</name>
        <dbReference type="ChEBI" id="CHEBI:29105"/>
        <label>7</label>
    </ligand>
</feature>
<feature type="binding site" evidence="19">
    <location>
        <position position="4359"/>
    </location>
    <ligand>
        <name>Zn(2+)</name>
        <dbReference type="ChEBI" id="CHEBI:29105"/>
        <label>7</label>
    </ligand>
</feature>
<feature type="binding site" evidence="19">
    <location>
        <position position="4361"/>
    </location>
    <ligand>
        <name>Zn(2+)</name>
        <dbReference type="ChEBI" id="CHEBI:29105"/>
        <label>7</label>
    </ligand>
</feature>
<feature type="binding site" evidence="3">
    <location>
        <position position="4578"/>
    </location>
    <ligand>
        <name>Mn(2+)</name>
        <dbReference type="ChEBI" id="CHEBI:29035"/>
    </ligand>
</feature>
<feature type="binding site" evidence="3">
    <location>
        <position position="4587"/>
    </location>
    <ligand>
        <name>Mn(2+)</name>
        <dbReference type="ChEBI" id="CHEBI:29035"/>
    </ligand>
</feature>
<feature type="binding site" evidence="34">
    <location>
        <position position="4660"/>
    </location>
    <ligand>
        <name>Zn(2+)</name>
        <dbReference type="ChEBI" id="CHEBI:29105"/>
        <label>8</label>
    </ligand>
</feature>
<feature type="binding site" evidence="34">
    <location>
        <position position="4666"/>
    </location>
    <ligand>
        <name>Zn(2+)</name>
        <dbReference type="ChEBI" id="CHEBI:29105"/>
        <label>8</label>
    </ligand>
</feature>
<feature type="binding site" evidence="34">
    <location>
        <position position="4671"/>
    </location>
    <ligand>
        <name>Zn(2+)</name>
        <dbReference type="ChEBI" id="CHEBI:29105"/>
        <label>8</label>
    </ligand>
</feature>
<feature type="binding site" evidence="34">
    <location>
        <position position="4675"/>
    </location>
    <ligand>
        <name>Zn(2+)</name>
        <dbReference type="ChEBI" id="CHEBI:29105"/>
        <label>8</label>
    </ligand>
</feature>
<feature type="binding site" evidence="15">
    <location>
        <position position="4852"/>
    </location>
    <ligand>
        <name>Zn(2+)</name>
        <dbReference type="ChEBI" id="CHEBI:29105"/>
        <label>9</label>
    </ligand>
</feature>
<feature type="binding site" evidence="15">
    <location>
        <position position="5007"/>
    </location>
    <ligand>
        <name>Zn(2+)</name>
        <dbReference type="ChEBI" id="CHEBI:29105"/>
        <label>9</label>
    </ligand>
</feature>
<feature type="binding site" evidence="15">
    <location>
        <position position="5010"/>
    </location>
    <ligand>
        <name>Zn(2+)</name>
        <dbReference type="ChEBI" id="CHEBI:29105"/>
        <label>9</label>
    </ligand>
</feature>
<feature type="binding site" evidence="15">
    <location>
        <position position="5011"/>
    </location>
    <ligand>
        <name>Zn(2+)</name>
        <dbReference type="ChEBI" id="CHEBI:29105"/>
        <label>9</label>
    </ligand>
</feature>
<feature type="binding site" evidence="10">
    <location>
        <position position="5302"/>
    </location>
    <ligand>
        <name>Zn(2+)</name>
        <dbReference type="ChEBI" id="CHEBI:29105"/>
        <label>10</label>
    </ligand>
</feature>
<feature type="binding site" evidence="10">
    <location>
        <position position="5305"/>
    </location>
    <ligand>
        <name>Zn(2+)</name>
        <dbReference type="ChEBI" id="CHEBI:29105"/>
        <label>10</label>
    </ligand>
</feature>
<feature type="binding site" evidence="10">
    <location>
        <position position="5313"/>
    </location>
    <ligand>
        <name>Zn(2+)</name>
        <dbReference type="ChEBI" id="CHEBI:29105"/>
        <label>11</label>
    </ligand>
</feature>
<feature type="binding site" evidence="10">
    <location>
        <position position="5316"/>
    </location>
    <ligand>
        <name>Zn(2+)</name>
        <dbReference type="ChEBI" id="CHEBI:29105"/>
        <label>11</label>
    </ligand>
</feature>
<feature type="binding site" evidence="10">
    <location>
        <position position="5323"/>
    </location>
    <ligand>
        <name>Zn(2+)</name>
        <dbReference type="ChEBI" id="CHEBI:29105"/>
        <label>10</label>
    </ligand>
</feature>
<feature type="binding site" evidence="10">
    <location>
        <position position="5326"/>
    </location>
    <ligand>
        <name>Zn(2+)</name>
        <dbReference type="ChEBI" id="CHEBI:29105"/>
        <label>10</label>
    </ligand>
</feature>
<feature type="binding site" evidence="10">
    <location>
        <position position="5330"/>
    </location>
    <ligand>
        <name>Zn(2+)</name>
        <dbReference type="ChEBI" id="CHEBI:29105"/>
        <label>11</label>
    </ligand>
</feature>
<feature type="binding site" evidence="10">
    <location>
        <position position="5336"/>
    </location>
    <ligand>
        <name>Zn(2+)</name>
        <dbReference type="ChEBI" id="CHEBI:29105"/>
        <label>11</label>
    </ligand>
</feature>
<feature type="binding site" evidence="10">
    <location>
        <position position="5347"/>
    </location>
    <ligand>
        <name>Zn(2+)</name>
        <dbReference type="ChEBI" id="CHEBI:29105"/>
        <label>12</label>
    </ligand>
</feature>
<feature type="binding site" evidence="10">
    <location>
        <position position="5352"/>
    </location>
    <ligand>
        <name>Zn(2+)</name>
        <dbReference type="ChEBI" id="CHEBI:29105"/>
        <label>12</label>
    </ligand>
</feature>
<feature type="binding site" evidence="10">
    <location>
        <position position="5369"/>
    </location>
    <ligand>
        <name>Zn(2+)</name>
        <dbReference type="ChEBI" id="CHEBI:29105"/>
        <label>12</label>
    </ligand>
</feature>
<feature type="binding site" evidence="10">
    <location>
        <position position="5372"/>
    </location>
    <ligand>
        <name>Zn(2+)</name>
        <dbReference type="ChEBI" id="CHEBI:29105"/>
        <label>12</label>
    </ligand>
</feature>
<feature type="binding site" evidence="1">
    <location>
        <begin position="5578"/>
        <end position="5585"/>
    </location>
    <ligand>
        <name>ATP</name>
        <dbReference type="ChEBI" id="CHEBI:30616"/>
    </ligand>
</feature>
<feature type="binding site" evidence="20">
    <location>
        <position position="6156"/>
    </location>
    <ligand>
        <name>Zn(2+)</name>
        <dbReference type="ChEBI" id="CHEBI:29105"/>
        <label>13</label>
    </ligand>
</feature>
<feature type="binding site" evidence="20">
    <location>
        <position position="6160"/>
    </location>
    <ligand>
        <name>Zn(2+)</name>
        <dbReference type="ChEBI" id="CHEBI:29105"/>
        <label>13</label>
    </ligand>
</feature>
<feature type="binding site" evidence="20">
    <location>
        <position position="6163"/>
    </location>
    <ligand>
        <name>Zn(2+)</name>
        <dbReference type="ChEBI" id="CHEBI:29105"/>
        <label>13</label>
    </ligand>
</feature>
<feature type="binding site" evidence="20">
    <location>
        <position position="6178"/>
    </location>
    <ligand>
        <name>Zn(2+)</name>
        <dbReference type="ChEBI" id="CHEBI:29105"/>
        <label>13</label>
    </ligand>
</feature>
<feature type="binding site" evidence="21">
    <location>
        <begin position="6230"/>
        <end position="6236"/>
    </location>
    <ligand>
        <name>S-adenosyl-L-methionine</name>
        <dbReference type="ChEBI" id="CHEBI:59789"/>
    </ligand>
</feature>
<feature type="binding site" evidence="21">
    <location>
        <position position="6346"/>
    </location>
    <ligand>
        <name>Zn(2+)</name>
        <dbReference type="ChEBI" id="CHEBI:29105"/>
        <label>14</label>
    </ligand>
</feature>
<feature type="binding site" evidence="21">
    <location>
        <position position="6367"/>
    </location>
    <ligand>
        <name>Zn(2+)</name>
        <dbReference type="ChEBI" id="CHEBI:29105"/>
        <label>14</label>
    </ligand>
</feature>
<feature type="binding site" evidence="21">
    <location>
        <position position="6378"/>
    </location>
    <ligand>
        <name>Zn(2+)</name>
        <dbReference type="ChEBI" id="CHEBI:29105"/>
        <label>14</label>
    </ligand>
</feature>
<feature type="binding site" evidence="21">
    <location>
        <position position="6381"/>
    </location>
    <ligand>
        <name>Zn(2+)</name>
        <dbReference type="ChEBI" id="CHEBI:29105"/>
        <label>14</label>
    </ligand>
</feature>
<feature type="site" description="Cleavage; by PL1-PRO" evidence="1">
    <location>
        <begin position="246"/>
        <end position="247"/>
    </location>
</feature>
<feature type="site" description="Cleavage; by PL1-PRO" evidence="1">
    <location>
        <begin position="851"/>
        <end position="852"/>
    </location>
</feature>
<feature type="site" description="Cleavage; by PL2-PRO" evidence="1">
    <location>
        <begin position="2750"/>
        <end position="2751"/>
    </location>
</feature>
<feature type="site" description="Cleavage; by 3CL-PRO" evidence="1">
    <location>
        <begin position="3246"/>
        <end position="3247"/>
    </location>
</feature>
<feature type="site" description="Cleavage; by 3CL-PRO" evidence="1">
    <location>
        <begin position="3549"/>
        <end position="3550"/>
    </location>
</feature>
<feature type="site" description="Cleavage; by 3CL-PRO" evidence="1">
    <location>
        <begin position="3836"/>
        <end position="3837"/>
    </location>
</feature>
<feature type="site" description="Cleavage; by 3CL-PRO" evidence="1">
    <location>
        <begin position="3925"/>
        <end position="3926"/>
    </location>
</feature>
<feature type="site" description="Cleavage; by 3CL-PRO" evidence="1">
    <location>
        <begin position="4122"/>
        <end position="4123"/>
    </location>
</feature>
<feature type="site" description="Cleavage; by 3CL-PRO" evidence="1">
    <location>
        <begin position="4232"/>
        <end position="4233"/>
    </location>
</feature>
<feature type="site" description="Cleavage; by 3CL-PRO" evidence="1">
    <location>
        <begin position="4369"/>
        <end position="4370"/>
    </location>
</feature>
<feature type="site" description="Cleavage; by 3CL-PRO" evidence="1">
    <location>
        <begin position="5297"/>
        <end position="5298"/>
    </location>
</feature>
<feature type="site" description="Cleavage; by 3CL-PRO" evidence="1">
    <location>
        <begin position="5900"/>
        <end position="5901"/>
    </location>
</feature>
<feature type="site" description="Cleavage; by 3CL-PRO" evidence="1">
    <location>
        <begin position="6421"/>
        <end position="6422"/>
    </location>
</feature>
<feature type="site" description="Cleavage; by 3CL-PRO" evidence="1">
    <location>
        <begin position="6795"/>
        <end position="6796"/>
    </location>
</feature>
<feature type="disulfide bond" evidence="32">
    <location>
        <begin position="2251"/>
        <end position="2275"/>
    </location>
</feature>
<feature type="disulfide bond" evidence="32">
    <location>
        <begin position="2266"/>
        <end position="2272"/>
    </location>
</feature>
<dbReference type="EC" id="3.4.19.12"/>
<dbReference type="EC" id="3.4.22.-"/>
<dbReference type="EC" id="2.7.7.48"/>
<dbReference type="EC" id="2.7.7.50"/>
<dbReference type="EC" id="3.6.4.12"/>
<dbReference type="EC" id="3.6.4.13"/>
<dbReference type="EC" id="2.1.1.56"/>
<dbReference type="EC" id="3.1.13.-"/>
<dbReference type="EC" id="4.6.1.-"/>
<dbReference type="EC" id="2.1.1.57"/>
<dbReference type="EMBL" id="AF220295">
    <property type="protein sequence ID" value="AAL40396.1"/>
    <property type="status" value="ALT_SEQ"/>
    <property type="molecule type" value="Genomic_RNA"/>
</dbReference>
<dbReference type="EMBL" id="AF220295">
    <property type="protein sequence ID" value="AAL40397.1"/>
    <property type="status" value="ALT_SEQ"/>
    <property type="molecule type" value="Genomic_RNA"/>
</dbReference>
<dbReference type="SMR" id="P0C6X0"/>
<dbReference type="IntAct" id="P0C6X0">
    <property type="interactions" value="1"/>
</dbReference>
<dbReference type="Proteomes" id="UP000008572">
    <property type="component" value="Genome"/>
</dbReference>
<dbReference type="GO" id="GO:0044172">
    <property type="term" value="C:host cell endoplasmic reticulum-Golgi intermediate compartment"/>
    <property type="evidence" value="ECO:0007669"/>
    <property type="project" value="UniProtKB-SubCell"/>
</dbReference>
<dbReference type="GO" id="GO:0033644">
    <property type="term" value="C:host cell membrane"/>
    <property type="evidence" value="ECO:0007669"/>
    <property type="project" value="UniProtKB-SubCell"/>
</dbReference>
<dbReference type="GO" id="GO:0044220">
    <property type="term" value="C:host cell perinuclear region of cytoplasm"/>
    <property type="evidence" value="ECO:0007669"/>
    <property type="project" value="UniProtKB-SubCell"/>
</dbReference>
<dbReference type="GO" id="GO:0016020">
    <property type="term" value="C:membrane"/>
    <property type="evidence" value="ECO:0007669"/>
    <property type="project" value="UniProtKB-KW"/>
</dbReference>
<dbReference type="GO" id="GO:0000175">
    <property type="term" value="F:3'-5'-RNA exonuclease activity"/>
    <property type="evidence" value="ECO:0007669"/>
    <property type="project" value="InterPro"/>
</dbReference>
<dbReference type="GO" id="GO:0043139">
    <property type="term" value="F:5'-3' DNA helicase activity"/>
    <property type="evidence" value="ECO:0007669"/>
    <property type="project" value="TreeGrafter"/>
</dbReference>
<dbReference type="GO" id="GO:0005524">
    <property type="term" value="F:ATP binding"/>
    <property type="evidence" value="ECO:0007669"/>
    <property type="project" value="UniProtKB-KW"/>
</dbReference>
<dbReference type="GO" id="GO:0016887">
    <property type="term" value="F:ATP hydrolysis activity"/>
    <property type="evidence" value="ECO:0007669"/>
    <property type="project" value="RHEA"/>
</dbReference>
<dbReference type="GO" id="GO:0004843">
    <property type="term" value="F:cysteine-type deubiquitinase activity"/>
    <property type="evidence" value="ECO:0007669"/>
    <property type="project" value="UniProtKB-EC"/>
</dbReference>
<dbReference type="GO" id="GO:0004197">
    <property type="term" value="F:cysteine-type endopeptidase activity"/>
    <property type="evidence" value="ECO:0007669"/>
    <property type="project" value="InterPro"/>
</dbReference>
<dbReference type="GO" id="GO:0004519">
    <property type="term" value="F:endonuclease activity"/>
    <property type="evidence" value="ECO:0007669"/>
    <property type="project" value="UniProtKB-KW"/>
</dbReference>
<dbReference type="GO" id="GO:0016829">
    <property type="term" value="F:lyase activity"/>
    <property type="evidence" value="ECO:0007669"/>
    <property type="project" value="UniProtKB-KW"/>
</dbReference>
<dbReference type="GO" id="GO:0004483">
    <property type="term" value="F:mRNA (nucleoside-2'-O-)-methyltransferase activity"/>
    <property type="evidence" value="ECO:0007669"/>
    <property type="project" value="InterPro"/>
</dbReference>
<dbReference type="GO" id="GO:0004482">
    <property type="term" value="F:mRNA 5'-cap (guanine-N7-)-methyltransferase activity"/>
    <property type="evidence" value="ECO:0007669"/>
    <property type="project" value="InterPro"/>
</dbReference>
<dbReference type="GO" id="GO:0008242">
    <property type="term" value="F:omega peptidase activity"/>
    <property type="evidence" value="ECO:0007669"/>
    <property type="project" value="InterPro"/>
</dbReference>
<dbReference type="GO" id="GO:0003724">
    <property type="term" value="F:RNA helicase activity"/>
    <property type="evidence" value="ECO:0007669"/>
    <property type="project" value="UniProtKB-EC"/>
</dbReference>
<dbReference type="GO" id="GO:0003968">
    <property type="term" value="F:RNA-directed RNA polymerase activity"/>
    <property type="evidence" value="ECO:0007669"/>
    <property type="project" value="UniProtKB-KW"/>
</dbReference>
<dbReference type="GO" id="GO:0003727">
    <property type="term" value="F:single-stranded RNA binding"/>
    <property type="evidence" value="ECO:0007669"/>
    <property type="project" value="InterPro"/>
</dbReference>
<dbReference type="GO" id="GO:0008270">
    <property type="term" value="F:zinc ion binding"/>
    <property type="evidence" value="ECO:0007669"/>
    <property type="project" value="UniProtKB-KW"/>
</dbReference>
<dbReference type="GO" id="GO:0006351">
    <property type="term" value="P:DNA-templated transcription"/>
    <property type="evidence" value="ECO:0007669"/>
    <property type="project" value="InterPro"/>
</dbReference>
<dbReference type="GO" id="GO:0006508">
    <property type="term" value="P:proteolysis"/>
    <property type="evidence" value="ECO:0007669"/>
    <property type="project" value="UniProtKB-KW"/>
</dbReference>
<dbReference type="GO" id="GO:0010506">
    <property type="term" value="P:regulation of autophagy"/>
    <property type="evidence" value="ECO:0007669"/>
    <property type="project" value="InterPro"/>
</dbReference>
<dbReference type="GO" id="GO:0039520">
    <property type="term" value="P:symbiont-mediated activation of host autophagy"/>
    <property type="evidence" value="ECO:0007669"/>
    <property type="project" value="UniProtKB-KW"/>
</dbReference>
<dbReference type="GO" id="GO:0039595">
    <property type="term" value="P:symbiont-mediated degradation of host mRNA"/>
    <property type="evidence" value="ECO:0007669"/>
    <property type="project" value="UniProtKB-KW"/>
</dbReference>
<dbReference type="GO" id="GO:0039648">
    <property type="term" value="P:symbiont-mediated perturbation of host ubiquitin-like protein modification"/>
    <property type="evidence" value="ECO:0007669"/>
    <property type="project" value="UniProtKB-KW"/>
</dbReference>
<dbReference type="GO" id="GO:0039657">
    <property type="term" value="P:symbiont-mediated suppression of host gene expression"/>
    <property type="evidence" value="ECO:0007669"/>
    <property type="project" value="UniProtKB-KW"/>
</dbReference>
<dbReference type="GO" id="GO:0039579">
    <property type="term" value="P:symbiont-mediated suppression of host ISG15-protein conjugation"/>
    <property type="evidence" value="ECO:0007669"/>
    <property type="project" value="UniProtKB-KW"/>
</dbReference>
<dbReference type="GO" id="GO:0085034">
    <property type="term" value="P:symbiont-mediated suppression of host NF-kappaB cascade"/>
    <property type="evidence" value="ECO:0007669"/>
    <property type="project" value="UniProtKB-KW"/>
</dbReference>
<dbReference type="GO" id="GO:0039502">
    <property type="term" value="P:symbiont-mediated suppression of host type I interferon-mediated signaling pathway"/>
    <property type="evidence" value="ECO:0007669"/>
    <property type="project" value="UniProtKB-KW"/>
</dbReference>
<dbReference type="GO" id="GO:0019082">
    <property type="term" value="P:viral protein processing"/>
    <property type="evidence" value="ECO:0007669"/>
    <property type="project" value="InterPro"/>
</dbReference>
<dbReference type="GO" id="GO:0039694">
    <property type="term" value="P:viral RNA genome replication"/>
    <property type="evidence" value="ECO:0007669"/>
    <property type="project" value="InterPro"/>
</dbReference>
<dbReference type="GO" id="GO:0075523">
    <property type="term" value="P:viral translational frameshifting"/>
    <property type="evidence" value="ECO:0007669"/>
    <property type="project" value="UniProtKB-KW"/>
</dbReference>
<dbReference type="CDD" id="cd21409">
    <property type="entry name" value="1B_cv_Nsp13-like"/>
    <property type="match status" value="1"/>
</dbReference>
<dbReference type="CDD" id="cd21901">
    <property type="entry name" value="alpha_betaCoV_Nsp10"/>
    <property type="match status" value="1"/>
</dbReference>
<dbReference type="CDD" id="cd21560">
    <property type="entry name" value="betaCoV-Nsp6"/>
    <property type="match status" value="1"/>
</dbReference>
<dbReference type="CDD" id="cd21722">
    <property type="entry name" value="betaCoV_Nsp13-helicase"/>
    <property type="match status" value="1"/>
</dbReference>
<dbReference type="CDD" id="cd21659">
    <property type="entry name" value="betaCoV_Nsp14"/>
    <property type="match status" value="1"/>
</dbReference>
<dbReference type="CDD" id="cd21519">
    <property type="entry name" value="betaCoV_Nsp2_MHV-like"/>
    <property type="match status" value="1"/>
</dbReference>
<dbReference type="CDD" id="cd21666">
    <property type="entry name" value="betaCoV_Nsp5_Mpro"/>
    <property type="match status" value="1"/>
</dbReference>
<dbReference type="CDD" id="cd21827">
    <property type="entry name" value="betaCoV_Nsp7"/>
    <property type="match status" value="1"/>
</dbReference>
<dbReference type="CDD" id="cd21831">
    <property type="entry name" value="betaCoV_Nsp8"/>
    <property type="match status" value="1"/>
</dbReference>
<dbReference type="CDD" id="cd21898">
    <property type="entry name" value="betaCoV_Nsp9"/>
    <property type="match status" value="1"/>
</dbReference>
<dbReference type="CDD" id="cd21732">
    <property type="entry name" value="betaCoV_PLPro"/>
    <property type="match status" value="1"/>
</dbReference>
<dbReference type="CDD" id="cd21473">
    <property type="entry name" value="cv_Nsp4_TM"/>
    <property type="match status" value="1"/>
</dbReference>
<dbReference type="CDD" id="cd21524">
    <property type="entry name" value="DPUP_MHV_Nsp3"/>
    <property type="match status" value="1"/>
</dbReference>
<dbReference type="CDD" id="cd21593">
    <property type="entry name" value="HCoV_HKU1-like_RdRp"/>
    <property type="match status" value="1"/>
</dbReference>
<dbReference type="CDD" id="cd21167">
    <property type="entry name" value="M_alpha_beta_cv_Nsp15-like"/>
    <property type="match status" value="1"/>
</dbReference>
<dbReference type="CDD" id="cd21557">
    <property type="entry name" value="Macro_X_Nsp3-like"/>
    <property type="match status" value="1"/>
</dbReference>
<dbReference type="CDD" id="cd21879">
    <property type="entry name" value="MHV-like_Nsp1"/>
    <property type="match status" value="1"/>
</dbReference>
<dbReference type="CDD" id="cd21812">
    <property type="entry name" value="MHV-like_Nsp3_betaSM"/>
    <property type="match status" value="1"/>
</dbReference>
<dbReference type="CDD" id="cd21824">
    <property type="entry name" value="MHV-like_Nsp3_NAB"/>
    <property type="match status" value="1"/>
</dbReference>
<dbReference type="CDD" id="cd21161">
    <property type="entry name" value="NendoU_cv_Nsp15-like"/>
    <property type="match status" value="1"/>
</dbReference>
<dbReference type="CDD" id="cd21171">
    <property type="entry name" value="NTD_alpha_betaCoV_Nsp15-like"/>
    <property type="match status" value="1"/>
</dbReference>
<dbReference type="CDD" id="cd21689">
    <property type="entry name" value="stalk_CoV_Nsp13-like"/>
    <property type="match status" value="1"/>
</dbReference>
<dbReference type="CDD" id="cd21714">
    <property type="entry name" value="TM_Y_MHV-like_Nsp3_C"/>
    <property type="match status" value="1"/>
</dbReference>
<dbReference type="CDD" id="cd21467">
    <property type="entry name" value="Ubl1_cv_Nsp3_N-like"/>
    <property type="match status" value="1"/>
</dbReference>
<dbReference type="CDD" id="cd21401">
    <property type="entry name" value="ZBD_cv_Nsp13-like"/>
    <property type="match status" value="1"/>
</dbReference>
<dbReference type="FunFam" id="1.10.150.420:FF:000001">
    <property type="entry name" value="Replicase polyprotein"/>
    <property type="match status" value="1"/>
</dbReference>
<dbReference type="Gene3D" id="1.10.8.1190">
    <property type="match status" value="2"/>
</dbReference>
<dbReference type="Gene3D" id="2.60.120.1680">
    <property type="match status" value="1"/>
</dbReference>
<dbReference type="Gene3D" id="3.10.20.350">
    <property type="match status" value="1"/>
</dbReference>
<dbReference type="Gene3D" id="3.10.20.540">
    <property type="match status" value="1"/>
</dbReference>
<dbReference type="Gene3D" id="3.40.50.11580">
    <property type="match status" value="1"/>
</dbReference>
<dbReference type="Gene3D" id="6.10.140.2090">
    <property type="match status" value="1"/>
</dbReference>
<dbReference type="Gene3D" id="1.10.150.420">
    <property type="entry name" value="Coronavirus nonstructural protein 4 C-terminus"/>
    <property type="match status" value="1"/>
</dbReference>
<dbReference type="Gene3D" id="3.40.220.10">
    <property type="entry name" value="Leucine Aminopeptidase, subunit E, domain 1"/>
    <property type="match status" value="1"/>
</dbReference>
<dbReference type="Gene3D" id="1.10.1840.10">
    <property type="entry name" value="main proteinase (3clpro) structure, domain 3"/>
    <property type="match status" value="1"/>
</dbReference>
<dbReference type="Gene3D" id="3.30.160.820">
    <property type="entry name" value="Nsp15 N-terminal domain-like"/>
    <property type="match status" value="1"/>
</dbReference>
<dbReference type="Gene3D" id="1.10.8.370">
    <property type="entry name" value="nsp7 replicase"/>
    <property type="match status" value="1"/>
</dbReference>
<dbReference type="Gene3D" id="3.30.70.3540">
    <property type="entry name" value="Nsp8 replicase, head domain"/>
    <property type="match status" value="1"/>
</dbReference>
<dbReference type="Gene3D" id="3.40.50.300">
    <property type="entry name" value="P-loop containing nucleotide triphosphate hydrolases"/>
    <property type="match status" value="2"/>
</dbReference>
<dbReference type="Gene3D" id="2.40.10.250">
    <property type="entry name" value="Replicase NSP9"/>
    <property type="match status" value="1"/>
</dbReference>
<dbReference type="Gene3D" id="3.40.50.11020">
    <property type="entry name" value="Replicase polyprotein, nucleic acid-binding domain"/>
    <property type="match status" value="1"/>
</dbReference>
<dbReference type="Gene3D" id="2.40.10.10">
    <property type="entry name" value="Trypsin-like serine proteases"/>
    <property type="match status" value="2"/>
</dbReference>
<dbReference type="Gene3D" id="3.40.50.150">
    <property type="entry name" value="Vaccinia Virus protein VP39"/>
    <property type="match status" value="1"/>
</dbReference>
<dbReference type="InterPro" id="IPR027351">
    <property type="entry name" value="(+)RNA_virus_helicase_core_dom"/>
</dbReference>
<dbReference type="InterPro" id="IPR046443">
    <property type="entry name" value="a/bCoV_NSP1_glob"/>
</dbReference>
<dbReference type="InterPro" id="IPR046440">
    <property type="entry name" value="AV_NSP11N_COV_NSP15M"/>
</dbReference>
<dbReference type="InterPro" id="IPR022570">
    <property type="entry name" value="B-CoV_A_NSP1"/>
</dbReference>
<dbReference type="InterPro" id="IPR046442">
    <property type="entry name" value="bCoV_NSP1_C"/>
</dbReference>
<dbReference type="InterPro" id="IPR050534">
    <property type="entry name" value="Coronavir_polyprotein_1ab"/>
</dbReference>
<dbReference type="InterPro" id="IPR043608">
    <property type="entry name" value="CoV_NSP15_M"/>
</dbReference>
<dbReference type="InterPro" id="IPR043606">
    <property type="entry name" value="CoV_NSP15_N"/>
</dbReference>
<dbReference type="InterPro" id="IPR043613">
    <property type="entry name" value="CoV_NSP2_C"/>
</dbReference>
<dbReference type="InterPro" id="IPR047573">
    <property type="entry name" value="CoV_NSP2_M"/>
</dbReference>
<dbReference type="InterPro" id="IPR049894">
    <property type="entry name" value="COV_NSP3_3ECTO"/>
</dbReference>
<dbReference type="InterPro" id="IPR043611">
    <property type="entry name" value="CoV_NSP3_C"/>
</dbReference>
<dbReference type="InterPro" id="IPR047566">
    <property type="entry name" value="CoV_NSP3_Y"/>
</dbReference>
<dbReference type="InterPro" id="IPR032505">
    <property type="entry name" value="CoV_NSP4_C"/>
</dbReference>
<dbReference type="InterPro" id="IPR043612">
    <property type="entry name" value="CoV_NSP4_N"/>
</dbReference>
<dbReference type="InterPro" id="IPR043502">
    <property type="entry name" value="DNA/RNA_pol_sf"/>
</dbReference>
<dbReference type="InterPro" id="IPR041679">
    <property type="entry name" value="DNA2/NAM7-like_C"/>
</dbReference>
<dbReference type="InterPro" id="IPR022733">
    <property type="entry name" value="DPUP_SUD_C_bCoV"/>
</dbReference>
<dbReference type="InterPro" id="IPR037227">
    <property type="entry name" value="EndoU-like"/>
</dbReference>
<dbReference type="InterPro" id="IPR002589">
    <property type="entry name" value="Macro_dom"/>
</dbReference>
<dbReference type="InterPro" id="IPR043472">
    <property type="entry name" value="Macro_dom-like"/>
</dbReference>
<dbReference type="InterPro" id="IPR044371">
    <property type="entry name" value="Macro_X_NSP3-like"/>
</dbReference>
<dbReference type="InterPro" id="IPR046435">
    <property type="entry name" value="N7_MTase_CoV"/>
</dbReference>
<dbReference type="InterPro" id="IPR043609">
    <property type="entry name" value="NendoU_nidovirus"/>
</dbReference>
<dbReference type="InterPro" id="IPR044863">
    <property type="entry name" value="NIRAN"/>
</dbReference>
<dbReference type="InterPro" id="IPR046438">
    <property type="entry name" value="NIV_2_O_MTASE"/>
</dbReference>
<dbReference type="InterPro" id="IPR046436">
    <property type="entry name" value="NIV_EXON"/>
</dbReference>
<dbReference type="InterPro" id="IPR036333">
    <property type="entry name" value="NSP10_sf_CoV"/>
</dbReference>
<dbReference type="InterPro" id="IPR047570">
    <property type="entry name" value="NSP12_IF_CoV"/>
</dbReference>
<dbReference type="InterPro" id="IPR044343">
    <property type="entry name" value="NSP13_1B_dom_CoV"/>
</dbReference>
<dbReference type="InterPro" id="IPR048673">
    <property type="entry name" value="NSP13_stalk_CoV"/>
</dbReference>
<dbReference type="InterPro" id="IPR048672">
    <property type="entry name" value="NSP13_ZBD_CoV"/>
</dbReference>
<dbReference type="InterPro" id="IPR027352">
    <property type="entry name" value="NSP13_ZBD_CoV-like"/>
</dbReference>
<dbReference type="InterPro" id="IPR044315">
    <property type="entry name" value="NSP14_betaCoV"/>
</dbReference>
<dbReference type="InterPro" id="IPR009466">
    <property type="entry name" value="NSP14_CoV"/>
</dbReference>
<dbReference type="InterPro" id="IPR044330">
    <property type="entry name" value="NSP15_alpha_betaCoV_N"/>
</dbReference>
<dbReference type="InterPro" id="IPR044322">
    <property type="entry name" value="NSP15_M_alpha_beta_CoV"/>
</dbReference>
<dbReference type="InterPro" id="IPR043174">
    <property type="entry name" value="NSP15_middle_sf"/>
</dbReference>
<dbReference type="InterPro" id="IPR042515">
    <property type="entry name" value="NSP15_N_CoV"/>
</dbReference>
<dbReference type="InterPro" id="IPR044401">
    <property type="entry name" value="NSP15_NendoU_CoV"/>
</dbReference>
<dbReference type="InterPro" id="IPR009461">
    <property type="entry name" value="NSP16_CoV-like"/>
</dbReference>
<dbReference type="InterPro" id="IPR044384">
    <property type="entry name" value="NSP2_MHV-like"/>
</dbReference>
<dbReference type="InterPro" id="IPR043615">
    <property type="entry name" value="NSP2_N_CoV"/>
</dbReference>
<dbReference type="InterPro" id="IPR044381">
    <property type="entry name" value="NSP3_DPUP_MHV"/>
</dbReference>
<dbReference type="InterPro" id="IPR047567">
    <property type="entry name" value="NSP3_G2M_bCoV"/>
</dbReference>
<dbReference type="InterPro" id="IPR032592">
    <property type="entry name" value="NSP3_NAB_bCoV"/>
</dbReference>
<dbReference type="InterPro" id="IPR042570">
    <property type="entry name" value="NSP3_NAB_bCoV_sf"/>
</dbReference>
<dbReference type="InterPro" id="IPR044357">
    <property type="entry name" value="NSP3_Ubl1_dom_CoV"/>
</dbReference>
<dbReference type="InterPro" id="IPR044353">
    <property type="entry name" value="Nsp3_Ubl2_dom_CoV"/>
</dbReference>
<dbReference type="InterPro" id="IPR038083">
    <property type="entry name" value="NSP3A-like"/>
</dbReference>
<dbReference type="InterPro" id="IPR038123">
    <property type="entry name" value="NSP4_C_sf_CoV"/>
</dbReference>
<dbReference type="InterPro" id="IPR044367">
    <property type="entry name" value="NSP6_betaCoV"/>
</dbReference>
<dbReference type="InterPro" id="IPR043610">
    <property type="entry name" value="NSP6_CoV"/>
</dbReference>
<dbReference type="InterPro" id="IPR014828">
    <property type="entry name" value="NSP7_CoV"/>
</dbReference>
<dbReference type="InterPro" id="IPR037204">
    <property type="entry name" value="NSP7_sf_CoV"/>
</dbReference>
<dbReference type="InterPro" id="IPR014829">
    <property type="entry name" value="NSP8_CoV"/>
</dbReference>
<dbReference type="InterPro" id="IPR037230">
    <property type="entry name" value="NSP8_sf_CoV"/>
</dbReference>
<dbReference type="InterPro" id="IPR014822">
    <property type="entry name" value="NSP9_CoV"/>
</dbReference>
<dbReference type="InterPro" id="IPR036499">
    <property type="entry name" value="NSP9_sf_CoV"/>
</dbReference>
<dbReference type="InterPro" id="IPR027417">
    <property type="entry name" value="P-loop_NTPase"/>
</dbReference>
<dbReference type="InterPro" id="IPR002705">
    <property type="entry name" value="Pept_C30/C16_B_coronavir"/>
</dbReference>
<dbReference type="InterPro" id="IPR013016">
    <property type="entry name" value="Peptidase_C16_CoV"/>
</dbReference>
<dbReference type="InterPro" id="IPR008740">
    <property type="entry name" value="Peptidase_C30_CoV"/>
</dbReference>
<dbReference type="InterPro" id="IPR043477">
    <property type="entry name" value="Peptidase_C30_dom3_CoV"/>
</dbReference>
<dbReference type="InterPro" id="IPR009003">
    <property type="entry name" value="Peptidase_S1_PA"/>
</dbReference>
<dbReference type="InterPro" id="IPR043504">
    <property type="entry name" value="Peptidase_S1_PA_chymotrypsin"/>
</dbReference>
<dbReference type="InterPro" id="IPR043177">
    <property type="entry name" value="PLpro_N_sf_CoV"/>
</dbReference>
<dbReference type="InterPro" id="IPR043503">
    <property type="entry name" value="PLpro_palm_finger_dom_CoV"/>
</dbReference>
<dbReference type="InterPro" id="IPR043178">
    <property type="entry name" value="PLpro_thumb_sf_CoV"/>
</dbReference>
<dbReference type="InterPro" id="IPR046441">
    <property type="entry name" value="RdRp_CoV"/>
</dbReference>
<dbReference type="InterPro" id="IPR044347">
    <property type="entry name" value="RdRp_HCoV_HKU1-like"/>
</dbReference>
<dbReference type="InterPro" id="IPR009469">
    <property type="entry name" value="RdRp_N_CoV"/>
</dbReference>
<dbReference type="InterPro" id="IPR001205">
    <property type="entry name" value="RNA-dir_pol_C"/>
</dbReference>
<dbReference type="InterPro" id="IPR007094">
    <property type="entry name" value="RNA-dir_pol_PSvirus"/>
</dbReference>
<dbReference type="InterPro" id="IPR018995">
    <property type="entry name" value="RNA_synth_NSP10_CoV"/>
</dbReference>
<dbReference type="InterPro" id="IPR029063">
    <property type="entry name" value="SAM-dependent_MTases_sf"/>
</dbReference>
<dbReference type="PANTHER" id="PTHR43788">
    <property type="entry name" value="DNA2/NAM7 HELICASE FAMILY MEMBER"/>
    <property type="match status" value="1"/>
</dbReference>
<dbReference type="PANTHER" id="PTHR43788:SF16">
    <property type="entry name" value="HELICASE WITH ZINC FINGER 2"/>
    <property type="match status" value="1"/>
</dbReference>
<dbReference type="Pfam" id="PF13087">
    <property type="entry name" value="AAA_12"/>
    <property type="match status" value="1"/>
</dbReference>
<dbReference type="Pfam" id="PF13604">
    <property type="entry name" value="AAA_30"/>
    <property type="match status" value="1"/>
</dbReference>
<dbReference type="Pfam" id="PF11963">
    <property type="entry name" value="B-CoV_A_NSP1"/>
    <property type="match status" value="1"/>
</dbReference>
<dbReference type="Pfam" id="PF16251">
    <property type="entry name" value="bCoV_NAB"/>
    <property type="match status" value="1"/>
</dbReference>
<dbReference type="Pfam" id="PF06471">
    <property type="entry name" value="CoV_ExoN"/>
    <property type="match status" value="1"/>
</dbReference>
<dbReference type="Pfam" id="PF06460">
    <property type="entry name" value="CoV_Methyltr_2"/>
    <property type="match status" value="1"/>
</dbReference>
<dbReference type="Pfam" id="PF09401">
    <property type="entry name" value="CoV_NSP10"/>
    <property type="match status" value="1"/>
</dbReference>
<dbReference type="Pfam" id="PF20631">
    <property type="entry name" value="CoV_NSP13_1B"/>
    <property type="match status" value="1"/>
</dbReference>
<dbReference type="Pfam" id="PF20633">
    <property type="entry name" value="CoV_NSP13_stalk"/>
    <property type="match status" value="1"/>
</dbReference>
<dbReference type="Pfam" id="PF20632">
    <property type="entry name" value="CoV_NSP13_ZBD"/>
    <property type="match status" value="1"/>
</dbReference>
<dbReference type="Pfam" id="PF19215">
    <property type="entry name" value="CoV_NSP15_C"/>
    <property type="match status" value="1"/>
</dbReference>
<dbReference type="Pfam" id="PF19216">
    <property type="entry name" value="CoV_NSP15_M"/>
    <property type="match status" value="1"/>
</dbReference>
<dbReference type="Pfam" id="PF19219">
    <property type="entry name" value="CoV_NSP15_N"/>
    <property type="match status" value="1"/>
</dbReference>
<dbReference type="Pfam" id="PF19218">
    <property type="entry name" value="CoV_NSP3_C"/>
    <property type="match status" value="1"/>
</dbReference>
<dbReference type="Pfam" id="PF16348">
    <property type="entry name" value="CoV_NSP4_C"/>
    <property type="match status" value="1"/>
</dbReference>
<dbReference type="Pfam" id="PF19217">
    <property type="entry name" value="CoV_NSP4_N"/>
    <property type="match status" value="1"/>
</dbReference>
<dbReference type="Pfam" id="PF19213">
    <property type="entry name" value="CoV_NSP6"/>
    <property type="match status" value="1"/>
</dbReference>
<dbReference type="Pfam" id="PF08716">
    <property type="entry name" value="CoV_NSP7"/>
    <property type="match status" value="1"/>
</dbReference>
<dbReference type="Pfam" id="PF08717">
    <property type="entry name" value="CoV_NSP8"/>
    <property type="match status" value="1"/>
</dbReference>
<dbReference type="Pfam" id="PF08710">
    <property type="entry name" value="CoV_NSP9"/>
    <property type="match status" value="1"/>
</dbReference>
<dbReference type="Pfam" id="PF08715">
    <property type="entry name" value="CoV_peptidase"/>
    <property type="match status" value="1"/>
</dbReference>
<dbReference type="Pfam" id="PF06478">
    <property type="entry name" value="CoV_RPol_N"/>
    <property type="match status" value="1"/>
</dbReference>
<dbReference type="Pfam" id="PF01661">
    <property type="entry name" value="Macro"/>
    <property type="match status" value="1"/>
</dbReference>
<dbReference type="Pfam" id="PF22104">
    <property type="entry name" value="MHV_Nsp3_DPUP"/>
    <property type="match status" value="1"/>
</dbReference>
<dbReference type="Pfam" id="PF01831">
    <property type="entry name" value="Peptidase_C16"/>
    <property type="match status" value="1"/>
</dbReference>
<dbReference type="Pfam" id="PF05409">
    <property type="entry name" value="Peptidase_C30"/>
    <property type="match status" value="1"/>
</dbReference>
<dbReference type="Pfam" id="PF00680">
    <property type="entry name" value="RdRP_1"/>
    <property type="match status" value="1"/>
</dbReference>
<dbReference type="SMART" id="SM00506">
    <property type="entry name" value="A1pp"/>
    <property type="match status" value="1"/>
</dbReference>
<dbReference type="SUPFAM" id="SSF144246">
    <property type="entry name" value="Coronavirus NSP10-like"/>
    <property type="match status" value="1"/>
</dbReference>
<dbReference type="SUPFAM" id="SSF140367">
    <property type="entry name" value="Coronavirus NSP7-like"/>
    <property type="match status" value="1"/>
</dbReference>
<dbReference type="SUPFAM" id="SSF143076">
    <property type="entry name" value="Coronavirus NSP8-like"/>
    <property type="match status" value="1"/>
</dbReference>
<dbReference type="SUPFAM" id="SSF56672">
    <property type="entry name" value="DNA/RNA polymerases"/>
    <property type="match status" value="1"/>
</dbReference>
<dbReference type="SUPFAM" id="SSF142877">
    <property type="entry name" value="EndoU-like"/>
    <property type="match status" value="1"/>
</dbReference>
<dbReference type="SUPFAM" id="SSF52949">
    <property type="entry name" value="Macro domain-like"/>
    <property type="match status" value="1"/>
</dbReference>
<dbReference type="SUPFAM" id="SSF159936">
    <property type="entry name" value="NSP3A-like"/>
    <property type="match status" value="1"/>
</dbReference>
<dbReference type="SUPFAM" id="SSF52540">
    <property type="entry name" value="P-loop containing nucleoside triphosphate hydrolases"/>
    <property type="match status" value="1"/>
</dbReference>
<dbReference type="SUPFAM" id="SSF101816">
    <property type="entry name" value="Replicase NSP9"/>
    <property type="match status" value="1"/>
</dbReference>
<dbReference type="SUPFAM" id="SSF53335">
    <property type="entry name" value="S-adenosyl-L-methionine-dependent methyltransferases"/>
    <property type="match status" value="1"/>
</dbReference>
<dbReference type="SUPFAM" id="SSF50494">
    <property type="entry name" value="Trypsin-like serine proteases"/>
    <property type="match status" value="1"/>
</dbReference>
<dbReference type="PROSITE" id="PS51961">
    <property type="entry name" value="AV_NSP11N_COV_NSP15M"/>
    <property type="match status" value="1"/>
</dbReference>
<dbReference type="PROSITE" id="PS51963">
    <property type="entry name" value="BCOV_NSP1_C"/>
    <property type="match status" value="1"/>
</dbReference>
<dbReference type="PROSITE" id="PS51942">
    <property type="entry name" value="BCOV_NSP3C_C"/>
    <property type="match status" value="1"/>
</dbReference>
<dbReference type="PROSITE" id="PS51994">
    <property type="entry name" value="BCOV_NSP3E_G2M"/>
    <property type="match status" value="1"/>
</dbReference>
<dbReference type="PROSITE" id="PS51945">
    <property type="entry name" value="BCOV_NSP3E_NAB"/>
    <property type="match status" value="1"/>
</dbReference>
<dbReference type="PROSITE" id="PS51993">
    <property type="entry name" value="COV_3ECTO"/>
    <property type="match status" value="1"/>
</dbReference>
<dbReference type="PROSITE" id="PS51952">
    <property type="entry name" value="COV_EXON_MTASE_COACT"/>
    <property type="match status" value="1"/>
</dbReference>
<dbReference type="PROSITE" id="PS51954">
    <property type="entry name" value="COV_N7_MTASE"/>
    <property type="match status" value="1"/>
</dbReference>
<dbReference type="PROSITE" id="PS51962">
    <property type="entry name" value="COV_NSP1"/>
    <property type="match status" value="1"/>
</dbReference>
<dbReference type="PROSITE" id="PS52000">
    <property type="entry name" value="COV_NSP12_IF"/>
    <property type="match status" value="1"/>
</dbReference>
<dbReference type="PROSITE" id="PS51948">
    <property type="entry name" value="COV_NSP12_RDRP"/>
    <property type="match status" value="1"/>
</dbReference>
<dbReference type="PROSITE" id="PS51960">
    <property type="entry name" value="COV_NSP15_NTD"/>
    <property type="match status" value="1"/>
</dbReference>
<dbReference type="PROSITE" id="PS51991">
    <property type="entry name" value="COV_NSP2_C"/>
    <property type="match status" value="1"/>
</dbReference>
<dbReference type="PROSITE" id="PS51990">
    <property type="entry name" value="COV_NSP2_M"/>
    <property type="match status" value="1"/>
</dbReference>
<dbReference type="PROSITE" id="PS51989">
    <property type="entry name" value="COV_NSP2_N"/>
    <property type="match status" value="1"/>
</dbReference>
<dbReference type="PROSITE" id="PS51992">
    <property type="entry name" value="COV_NSP3_Y"/>
    <property type="match status" value="1"/>
</dbReference>
<dbReference type="PROSITE" id="PS51943">
    <property type="entry name" value="COV_NSP3A_UBL"/>
    <property type="match status" value="1"/>
</dbReference>
<dbReference type="PROSITE" id="PS51944">
    <property type="entry name" value="COV_NSP3D_UBL"/>
    <property type="match status" value="1"/>
</dbReference>
<dbReference type="PROSITE" id="PS51946">
    <property type="entry name" value="COV_NSP4C"/>
    <property type="match status" value="1"/>
</dbReference>
<dbReference type="PROSITE" id="PS51949">
    <property type="entry name" value="COV_NSP7"/>
    <property type="match status" value="1"/>
</dbReference>
<dbReference type="PROSITE" id="PS51950">
    <property type="entry name" value="COV_NSP8"/>
    <property type="match status" value="1"/>
</dbReference>
<dbReference type="PROSITE" id="PS51951">
    <property type="entry name" value="COV_NSP9_SSRNA_BD"/>
    <property type="match status" value="1"/>
</dbReference>
<dbReference type="PROSITE" id="PS51653">
    <property type="entry name" value="CV_ZBD"/>
    <property type="match status" value="1"/>
</dbReference>
<dbReference type="PROSITE" id="PS51442">
    <property type="entry name" value="M_PRO"/>
    <property type="match status" value="1"/>
</dbReference>
<dbReference type="PROSITE" id="PS51154">
    <property type="entry name" value="MACRO"/>
    <property type="match status" value="1"/>
</dbReference>
<dbReference type="PROSITE" id="PS51958">
    <property type="entry name" value="NENDOU"/>
    <property type="match status" value="1"/>
</dbReference>
<dbReference type="PROSITE" id="PS51947">
    <property type="entry name" value="NIRAN"/>
    <property type="match status" value="1"/>
</dbReference>
<dbReference type="PROSITE" id="PS51955">
    <property type="entry name" value="NIV_2_O_MTASE"/>
    <property type="match status" value="1"/>
</dbReference>
<dbReference type="PROSITE" id="PS51953">
    <property type="entry name" value="NIV_EXON"/>
    <property type="match status" value="1"/>
</dbReference>
<dbReference type="PROSITE" id="PS51124">
    <property type="entry name" value="PEPTIDASE_C16"/>
    <property type="match status" value="2"/>
</dbReference>
<dbReference type="PROSITE" id="PS51657">
    <property type="entry name" value="PSRV_HELICASE"/>
    <property type="match status" value="1"/>
</dbReference>
<dbReference type="PROSITE" id="PS50507">
    <property type="entry name" value="RDRP_SSRNA_POS"/>
    <property type="match status" value="1"/>
</dbReference>
<gene>
    <name type="primary">rep</name>
    <name type="ORF">1a-1b</name>
</gene>
<comment type="function">
    <text evidence="2">The replicase polyprotein of coronaviruses is a multifunctional protein: it contains the activities necessary for the transcription of negative stranded RNA, leader RNA, subgenomic mRNAs and progeny virion RNA as well as proteinases responsible for the cleavage of the polyprotein into functional products.</text>
</comment>
<comment type="function">
    <molecule>Host translation inhibitor nsp1</molecule>
    <text evidence="2">Inhibits host translation by interacting with the 40S ribosomal subunit. The nsp1-40S ribosome complex further induces an endonucleolytic cleavage near the 5'UTR of host mRNAs, targeting them for degradation. Viral mRNAs are not susceptible to nsp1-mediated endonucleolytic RNA cleavage thanks to the presence of a 5'-end leader sequence and are therefore protected from degradation. By suppressing host gene expression, nsp1 facilitates efficient viral gene expression in infected cells and evasion from host immune response.</text>
</comment>
<comment type="function">
    <molecule>Non-structural protein 2</molecule>
    <text evidence="2">May play a role in the modulation of host cell survival signaling pathway by interacting with host PHB and PHB2. Indeed, these two proteins play a role in maintaining the functional integrity of the mitochondria and protecting cells from various stresses.</text>
</comment>
<comment type="function">
    <molecule>Papain-like proteinase nsp3</molecule>
    <text evidence="2">Responsible for the cleavages located at the N-terminus of the replicase polyprotein. In addition, PL-PRO possesses a deubiquitinating/deISGylating activity and processes both 'Lys-48'- and 'Lys-63'-linked polyubiquitin chains from cellular substrates. Participates together with nsp4 in the assembly of virally-induced cytoplasmic double-membrane vesicles necessary for viral replication. Antagonizes innate immune induction of type I interferon by blocking the phosphorylation, dimerization and subsequent nuclear translocation of host IRF3. Also prevents host NF-kappa-B signaling.</text>
</comment>
<comment type="function">
    <molecule>Non-structural protein 4</molecule>
    <text evidence="2">Participates in the assembly of virally-induced cytoplasmic double-membrane vesicles necessary for viral replication.</text>
</comment>
<comment type="function">
    <molecule>3C-like proteinase nsp5</molecule>
    <text evidence="2 9">Cleaves the C-terminus of replicase polyprotein at 11 sites. Recognizes substrates containing the core sequence [ILMVF]-Q-|-[SGACN]. Also able to bind an ADP-ribose-1''-phosphate (ADRP).</text>
</comment>
<comment type="function">
    <molecule>Non-structural protein 6</molecule>
    <text evidence="2">Plays a role in the initial induction of autophagosomes from host endoplasmic reticulum. Later, limits the expansion of these phagosomes that are no longer able to deliver viral components to lysosomes.</text>
</comment>
<comment type="function">
    <molecule>Non-structural protein 7</molecule>
    <text evidence="2">Forms a hexadecamer with nsp8 (8 subunits of each) that may participate in viral replication by acting as a primase. Alternatively, may synthesize substantially longer products than oligonucleotide primers.</text>
</comment>
<comment type="function">
    <molecule>Non-structural protein 8</molecule>
    <text evidence="2">Forms a hexadecamer with nsp7 (8 subunits of each) that may participate in viral replication by acting as a primase. Alternatively, may synthesize substantially longer products than oligonucleotide primers.</text>
</comment>
<comment type="function">
    <molecule>Viral protein genome-linked nsp9</molecule>
    <text evidence="3">Forms a primer, NSP9-pU, which is utilized by the polymerase for the initiation of RNA chains. Interacts with ribosome signal recognition particle RNA (SRP). Together with NSP8, suppress protein integration into the cell membrane, thereby disrupting host immune defenses.</text>
</comment>
<comment type="function">
    <molecule>Non-structural protein 10</molecule>
    <text evidence="2">Plays a pivotal role in viral transcription by stimulating both nsp14 3'-5' exoribonuclease and nsp16 2'-O-methyltransferase activities. Therefore plays an essential role in viral mRNAs cap methylation.</text>
</comment>
<comment type="function">
    <molecule>RNA-directed RNA polymerase nsp12</molecule>
    <text evidence="3">RNA-directed RNA polymerase that catalyzes the transcription of viral genomic and subgenomic RNAs. Acts in complex with nsp7 and nsp8 to transcribe both the minus and positive strands of genomic RNA. The kinase-like NiRAN domain of NSP12 attaches one or more nucleotides to the amino terminus of NSP9, forming a covalent RNA-protein intermediate that serves as transcription/replication primer. Subgenomic RNAs (sgRNAs) are formed by discontinuous transcription: The polymerase has the ability to pause at transcription-regulating sequences (TRS) and jump to the leader TRS, resulting in a major deletion. This creates a series of subgenomic RNAs that are replicated, transcribed and translated. In addition, Nsp12 is a subunit of the viral RNA capping enzyme that catalyzes the RNA guanylyltransferase reaction for genomic and sub-genomic RNAs. Subsequently, the NiRAN domain transfers RNA to GDP, and forms the core cap structure GpppA-RNA.</text>
</comment>
<comment type="function">
    <molecule>Helicase nsp13</molecule>
    <text evidence="2">Multi-functional protein with a zinc-binding domain in N-terminus displaying RNA and DNA duplex-unwinding activities with 5' to 3' polarity. Activity of helicase is dependent on magnesium.</text>
</comment>
<comment type="function">
    <molecule>Guanine-N7 methyltransferase nsp14</molecule>
    <text evidence="2">Plays a role in viral RNA synthesis through two distinct activities. The N7-guanine methyltransferase activity plays a role in the formation of the cap structure GpppA-RNA. The proofreading exoribonuclease reduces the sensitivity of the virus to RNA mutagens during replication. This activity acts on both ssRNA and dsRNA in a 3'-5' direction.</text>
</comment>
<comment type="function">
    <molecule>Uridylate-specific endoribonuclease nsp15</molecule>
    <text evidence="2">Plays a role in viral transcription/replication and prevents the simultaneous activation of host cell dsRNA sensors, such as MDA5/IFIH1, OAS, and PKR (By similarity). Acts by degrading the 5'-polyuridines generated during replication of the poly(A) region of viral genomic and subgenomic RNAs. Catalyzes a two-step reaction in which a 2'3'-cyclic phosphate (2'3'-cP) is first generated by 2'-O transesterification, which is then hydrolyzed to a 3'-phosphate (3'-P) (By similarity). If not degraded, poly(U) RNA would hybridize with poly(A) RNA tails and activate host dsRNA sensors (By similarity).</text>
</comment>
<comment type="function">
    <molecule>2'-O-methyltransferase nsp16</molecule>
    <text evidence="2">Methyltransferase that mediates mRNA cap 2'-O-ribose methylation to the 5'-cap structure of viral mRNAs. N7-methyl guanosine cap is a prerequisite for binding of nsp16. Therefore plays an essential role in viral mRNAs cap methylation which is essential to evade immune system.</text>
</comment>
<comment type="catalytic activity">
    <molecule>RNA-directed RNA polymerase nsp12</molecule>
    <reaction evidence="8">
        <text>RNA(n) + a ribonucleoside 5'-triphosphate = RNA(n+1) + diphosphate</text>
        <dbReference type="Rhea" id="RHEA:21248"/>
        <dbReference type="Rhea" id="RHEA-COMP:14527"/>
        <dbReference type="Rhea" id="RHEA-COMP:17342"/>
        <dbReference type="ChEBI" id="CHEBI:33019"/>
        <dbReference type="ChEBI" id="CHEBI:61557"/>
        <dbReference type="ChEBI" id="CHEBI:140395"/>
        <dbReference type="EC" id="2.7.7.48"/>
    </reaction>
</comment>
<comment type="catalytic activity">
    <molecule>Helicase nsp13</molecule>
    <reaction>
        <text>ATP + H2O = ADP + phosphate + H(+)</text>
        <dbReference type="Rhea" id="RHEA:13065"/>
        <dbReference type="ChEBI" id="CHEBI:15377"/>
        <dbReference type="ChEBI" id="CHEBI:15378"/>
        <dbReference type="ChEBI" id="CHEBI:30616"/>
        <dbReference type="ChEBI" id="CHEBI:43474"/>
        <dbReference type="ChEBI" id="CHEBI:456216"/>
        <dbReference type="EC" id="3.6.4.12"/>
    </reaction>
</comment>
<comment type="catalytic activity">
    <molecule>Helicase nsp13</molecule>
    <reaction>
        <text>ATP + H2O = ADP + phosphate + H(+)</text>
        <dbReference type="Rhea" id="RHEA:13065"/>
        <dbReference type="ChEBI" id="CHEBI:15377"/>
        <dbReference type="ChEBI" id="CHEBI:15378"/>
        <dbReference type="ChEBI" id="CHEBI:30616"/>
        <dbReference type="ChEBI" id="CHEBI:43474"/>
        <dbReference type="ChEBI" id="CHEBI:456216"/>
        <dbReference type="EC" id="3.6.4.13"/>
    </reaction>
</comment>
<comment type="catalytic activity">
    <molecule>Papain-like proteinase nsp3</molecule>
    <reaction>
        <text>Thiol-dependent hydrolysis of ester, thioester, amide, peptide and isopeptide bonds formed by the C-terminal Gly of ubiquitin (a 76-residue protein attached to proteins as an intracellular targeting signal).</text>
        <dbReference type="EC" id="3.4.19.12"/>
    </reaction>
</comment>
<comment type="catalytic activity">
    <molecule>2'-O-methyltransferase nsp16</molecule>
    <reaction evidence="2">
        <text>a 5'-end (N(7)-methyl 5'-triphosphoguanosine)-ribonucleoside in mRNA + S-adenosyl-L-methionine = a 5'-end (N(7)-methyl 5'-triphosphoguanosine)-(2'-O-methyl-ribonucleoside) in mRNA + S-adenosyl-L-homocysteine + H(+)</text>
        <dbReference type="Rhea" id="RHEA:67020"/>
        <dbReference type="Rhea" id="RHEA-COMP:17167"/>
        <dbReference type="Rhea" id="RHEA-COMP:17168"/>
        <dbReference type="ChEBI" id="CHEBI:15378"/>
        <dbReference type="ChEBI" id="CHEBI:57856"/>
        <dbReference type="ChEBI" id="CHEBI:59789"/>
        <dbReference type="ChEBI" id="CHEBI:156461"/>
        <dbReference type="ChEBI" id="CHEBI:167609"/>
        <dbReference type="EC" id="2.1.1.57"/>
    </reaction>
</comment>
<comment type="catalytic activity">
    <molecule>Uridylate-specific endoribonuclease nsp15</molecule>
    <reaction evidence="2">
        <text>uridylyl-uridylyl-ribonucleotide-RNA = a 3'-end uridylyl-2',3'-cyclophospho-uridine-RNA + a 5'-end dephospho-ribonucleoside-RNA</text>
        <dbReference type="Rhea" id="RHEA:67732"/>
        <dbReference type="Rhea" id="RHEA-COMP:13936"/>
        <dbReference type="Rhea" id="RHEA-COMP:17334"/>
        <dbReference type="Rhea" id="RHEA-COMP:17335"/>
        <dbReference type="ChEBI" id="CHEBI:138284"/>
        <dbReference type="ChEBI" id="CHEBI:173079"/>
        <dbReference type="ChEBI" id="CHEBI:173080"/>
    </reaction>
</comment>
<comment type="catalytic activity">
    <molecule>RNA-directed RNA polymerase nsp12</molecule>
    <reaction evidence="3">
        <text>a 5'-end diphospho-ribonucleoside in mRNA + GTP + H(+) = a 5'-end (5'-triphosphoguanosine)-ribonucleoside in mRNA + diphosphate</text>
        <dbReference type="Rhea" id="RHEA:67012"/>
        <dbReference type="Rhea" id="RHEA-COMP:17165"/>
        <dbReference type="Rhea" id="RHEA-COMP:17166"/>
        <dbReference type="ChEBI" id="CHEBI:15378"/>
        <dbReference type="ChEBI" id="CHEBI:33019"/>
        <dbReference type="ChEBI" id="CHEBI:37565"/>
        <dbReference type="ChEBI" id="CHEBI:167616"/>
        <dbReference type="ChEBI" id="CHEBI:167617"/>
        <dbReference type="EC" id="2.7.7.50"/>
    </reaction>
    <physiologicalReaction direction="left-to-right" evidence="3">
        <dbReference type="Rhea" id="RHEA:67013"/>
    </physiologicalReaction>
</comment>
<comment type="catalytic activity">
    <molecule>Guanine-N7 methyltransferase nsp14</molecule>
    <reaction evidence="2">
        <text>a 5'-end (5'-triphosphoguanosine)-ribonucleoside in mRNA + S-adenosyl-L-methionine = a 5'-end (N(7)-methyl 5'-triphosphoguanosine)-ribonucleoside in mRNA + S-adenosyl-L-homocysteine</text>
        <dbReference type="Rhea" id="RHEA:67008"/>
        <dbReference type="Rhea" id="RHEA-COMP:17166"/>
        <dbReference type="Rhea" id="RHEA-COMP:17167"/>
        <dbReference type="ChEBI" id="CHEBI:57856"/>
        <dbReference type="ChEBI" id="CHEBI:59789"/>
        <dbReference type="ChEBI" id="CHEBI:156461"/>
        <dbReference type="ChEBI" id="CHEBI:167617"/>
        <dbReference type="EC" id="2.1.1.56"/>
    </reaction>
    <physiologicalReaction direction="left-to-right" evidence="2">
        <dbReference type="Rhea" id="RHEA:67009"/>
    </physiologicalReaction>
</comment>
<comment type="cofactor">
    <molecule>Uridylate-specific endoribonuclease nsp15</molecule>
    <cofactor evidence="2">
        <name>Mn(2+)</name>
        <dbReference type="ChEBI" id="CHEBI:29035"/>
    </cofactor>
    <text evidence="2">Likely affects Nsp15 binding to RNA.</text>
</comment>
<comment type="cofactor">
    <molecule>RNA-directed RNA polymerase nsp12</molecule>
    <cofactor evidence="3">
        <name>Mg(2+)</name>
        <dbReference type="ChEBI" id="CHEBI:18420"/>
    </cofactor>
</comment>
<comment type="subunit">
    <molecule>Non-structural protein 2</molecule>
    <text evidence="2">Interacts with host PHB and PHB2.</text>
</comment>
<comment type="subunit">
    <molecule>Non-structural protein 4</molecule>
    <text evidence="2">Interacts with papain-like protease nsp3 and non-structural protein 6.</text>
</comment>
<comment type="subunit">
    <molecule>3C-like proteinase nsp5</molecule>
    <text evidence="2">Monomer. Homodimer. Only the homodimer shows catalytic activity.</text>
</comment>
<comment type="subunit">
    <molecule>Non-structural protein 7</molecule>
    <text evidence="3">Interacts with nsp8 and nsp12 to form the replication-transcription complex (RTC): nsp12, nsp7, two subunits of nsp8, and up to two subunits of nsp13.</text>
</comment>
<comment type="subunit">
    <molecule>Non-structural protein 8</molecule>
    <text evidence="3">Interacts with nsp7, nsp13 and nsp12 to form the replication-transcription complex (RTC): nsp12, nsp7, two subunits of nsp8, and up to two subunits of nsp13.</text>
</comment>
<comment type="subunit">
    <molecule>Viral protein genome-linked nsp9</molecule>
    <text evidence="3">Interacts with nsp12.</text>
</comment>
<comment type="subunit">
    <molecule>Non-structural protein 10</molecule>
    <text evidence="3">Interacts with proofreading exoribonuclease nsp14 and 2'-O-methyltransferase nsp16; these interactions enhance nsp14 and nsp16 enzymatic activities.</text>
</comment>
<comment type="subunit">
    <molecule>RNA-directed RNA polymerase nsp12</molecule>
    <text evidence="3">Interacts with nsp7 and nsp8 to form the replication-transcription complex (RTC): nsp12, nsp7, two subunits of nsp8, and up to two subunits of nsp13. Interacts with nsp9.</text>
</comment>
<comment type="subunit">
    <molecule>Helicase nsp13</molecule>
    <text evidence="3">Interacts with nsp8 to form the replication-transcription complex (RTC): nsp12, nsp7, two subunits of nsp8, and up to two subunits of nsp13.</text>
</comment>
<comment type="subcellular location">
    <molecule>Papain-like proteinase nsp3</molecule>
    <subcellularLocation>
        <location>Host membrane</location>
        <topology>Multi-pass membrane protein</topology>
    </subcellularLocation>
    <subcellularLocation>
        <location evidence="2">Host cytoplasm</location>
    </subcellularLocation>
</comment>
<comment type="subcellular location">
    <molecule>Non-structural protein 4</molecule>
    <subcellularLocation>
        <location>Host membrane</location>
        <topology>Multi-pass membrane protein</topology>
    </subcellularLocation>
    <subcellularLocation>
        <location>Host cytoplasm</location>
    </subcellularLocation>
    <text evidence="2">Localizes in virally-induced cytoplasmic double-membrane vesicles.</text>
</comment>
<comment type="subcellular location">
    <molecule>Non-structural protein 6</molecule>
    <subcellularLocation>
        <location evidence="36">Host membrane</location>
        <topology evidence="36">Multi-pass membrane protein</topology>
    </subcellularLocation>
</comment>
<comment type="subcellular location">
    <molecule>Non-structural protein 7</molecule>
    <subcellularLocation>
        <location evidence="1">Host cytoplasm</location>
        <location evidence="1">Host perinuclear region</location>
    </subcellularLocation>
    <text evidence="1">nsp7, nsp8, nsp9 and nsp10 are localized in cytoplasmic foci, largely perinuclear. Late in infection, they merge into confluent complexes (By similarity).</text>
</comment>
<comment type="subcellular location">
    <molecule>Non-structural protein 8</molecule>
    <subcellularLocation>
        <location evidence="1">Host cytoplasm</location>
        <location evidence="1">Host perinuclear region</location>
    </subcellularLocation>
    <text evidence="1">nsp7, nsp8, nsp9 and nsp10 are localized in cytoplasmic foci, largely perinuclear. Late in infection, they merge into confluent complexes (By similarity).</text>
</comment>
<comment type="subcellular location">
    <molecule>Viral protein genome-linked nsp9</molecule>
    <subcellularLocation>
        <location evidence="1">Host cytoplasm</location>
        <location evidence="1">Host perinuclear region</location>
    </subcellularLocation>
    <text evidence="1">nsp7, nsp8, nsp9 and nsp10 are localized in cytoplasmic foci, largely perinuclear. Late in infection, they merge into confluent complexes (By similarity).</text>
</comment>
<comment type="subcellular location">
    <molecule>Non-structural protein 10</molecule>
    <subcellularLocation>
        <location evidence="1">Host cytoplasm</location>
        <location evidence="1">Host perinuclear region</location>
    </subcellularLocation>
    <text evidence="1">nsp7, nsp8, nsp9 and nsp10 are localized in cytoplasmic foci, largely perinuclear. Late in infection, they merge into confluent complexes (By similarity).</text>
</comment>
<comment type="subcellular location">
    <molecule>Helicase nsp13</molecule>
    <subcellularLocation>
        <location evidence="36">Host endoplasmic reticulum-Golgi intermediate compartment</location>
    </subcellularLocation>
    <text evidence="1">The helicase interacts with the N protein in membranous complexes and colocalizes with sites of synthesis of new viral RNA.</text>
</comment>
<comment type="subcellular location">
    <molecule>Uridylate-specific endoribonuclease nsp15</molecule>
    <subcellularLocation>
        <location evidence="1">Host cytoplasm</location>
        <location evidence="1">Host perinuclear region</location>
    </subcellularLocation>
</comment>
<comment type="alternative products">
    <event type="ribosomal frameshifting"/>
    <isoform>
        <id>P0C6X0-1</id>
        <name>Replicase polyprotein 1ab</name>
        <name>pp1ab</name>
        <sequence type="displayed"/>
    </isoform>
    <isoform>
        <id>P0C6U1-1</id>
        <name>Replicase polyprotein 1a</name>
        <name>pp1a</name>
        <name>ORF1a polyprotein</name>
        <sequence type="external"/>
    </isoform>
</comment>
<comment type="domain">
    <text>The hydrophobic domains (HD) could mediate the membrane association of the replication complex and thereby alter the architecture of the host cell membrane.</text>
</comment>
<comment type="PTM">
    <text evidence="1">Specific enzymatic cleavages in vivo by its own proteases yield mature proteins. 3CL-PRO and PL-PRO proteinases are autocatalytically processed (By similarity).</text>
</comment>
<comment type="miscellaneous">
    <molecule>Isoform Replicase polyprotein 1ab</molecule>
    <text>Produced by -1 ribosomal frameshifting at the 1a-1b genes boundary.</text>
</comment>
<comment type="similarity">
    <text evidence="36">Belongs to the coronaviruses polyprotein 1ab family.</text>
</comment>
<comment type="sequence caution" evidence="36">
    <conflict type="erroneous gene model prediction">
        <sequence resource="EMBL-CDS" id="AAL40396"/>
    </conflict>
</comment>
<comment type="sequence caution" evidence="36">
    <conflict type="erroneous gene model prediction">
        <sequence resource="EMBL-CDS" id="AAL40397"/>
    </conflict>
</comment>
<proteinExistence type="inferred from homology"/>
<reference key="1">
    <citation type="submission" date="1999-12" db="EMBL/GenBank/DDBJ databases">
        <title>Bovine coronavirus (Quebec strain) full-length genomic sequence.</title>
        <authorList>
            <person name="Yoo D."/>
            <person name="Pei Y."/>
            <person name="Parker M.D."/>
            <person name="Cox G.J."/>
        </authorList>
    </citation>
    <scope>NUCLEOTIDE SEQUENCE [GENOMIC RNA]</scope>
</reference>
<protein>
    <recommendedName>
        <fullName>Replicase polyprotein 1ab</fullName>
        <shortName>pp1ab</shortName>
    </recommendedName>
    <alternativeName>
        <fullName>ORF1ab polyprotein</fullName>
    </alternativeName>
    <component>
        <recommendedName>
            <fullName>Host translation inhibitor nsp1</fullName>
            <shortName>nsp1</shortName>
        </recommendedName>
        <alternativeName>
            <fullName>p28</fullName>
        </alternativeName>
    </component>
    <component>
        <recommendedName>
            <fullName>Non-structural protein 2</fullName>
            <shortName>nsp2</shortName>
        </recommendedName>
        <alternativeName>
            <fullName>p65</fullName>
        </alternativeName>
    </component>
    <component>
        <recommendedName>
            <fullName>Papain-like proteinase nsp3</fullName>
            <shortName>PL-PRO</shortName>
            <ecNumber>3.4.19.12</ecNumber>
            <ecNumber>3.4.22.-</ecNumber>
        </recommendedName>
        <alternativeName>
            <fullName>Non-structural protein 3</fullName>
            <shortName>nsp3</shortName>
        </alternativeName>
        <alternativeName>
            <fullName>p210</fullName>
        </alternativeName>
    </component>
    <component>
        <recommendedName>
            <fullName>Non-structural protein 4</fullName>
            <shortName>nsp4</shortName>
        </recommendedName>
        <alternativeName>
            <fullName>Peptide HD2</fullName>
        </alternativeName>
        <alternativeName>
            <fullName>p44</fullName>
        </alternativeName>
    </component>
    <component>
        <recommendedName>
            <fullName>3C-like proteinase nsp5</fullName>
            <shortName>3CL-PRO</shortName>
            <shortName>3CLp</shortName>
            <ecNumber>3.4.22.-</ecNumber>
        </recommendedName>
        <alternativeName>
            <fullName>M-PRO</fullName>
        </alternativeName>
        <alternativeName>
            <fullName>nsp5</fullName>
        </alternativeName>
        <alternativeName>
            <fullName>p27</fullName>
        </alternativeName>
    </component>
    <component>
        <recommendedName>
            <fullName>Non-structural protein 6</fullName>
            <shortName>nsp6</shortName>
        </recommendedName>
    </component>
    <component>
        <recommendedName>
            <fullName>Non-structural protein 7</fullName>
            <shortName>nsp7</shortName>
        </recommendedName>
        <alternativeName>
            <fullName>p10</fullName>
        </alternativeName>
    </component>
    <component>
        <recommendedName>
            <fullName>Non-structural protein 8</fullName>
            <shortName>nsp8</shortName>
        </recommendedName>
        <alternativeName>
            <fullName>p22</fullName>
        </alternativeName>
    </component>
    <component>
        <recommendedName>
            <fullName>Viral protein genome-linked nsp9</fullName>
        </recommendedName>
        <alternativeName>
            <fullName>Non-structural protein 9</fullName>
            <shortName>nsp9</shortName>
        </alternativeName>
        <alternativeName>
            <fullName>RNA-capping enzyme subunit nsp9</fullName>
        </alternativeName>
        <alternativeName>
            <fullName>p12</fullName>
        </alternativeName>
    </component>
    <component>
        <recommendedName>
            <fullName>Non-structural protein 10</fullName>
            <shortName>nsp10</shortName>
        </recommendedName>
        <alternativeName>
            <fullName>Growth factor-like peptide</fullName>
            <shortName>GFL</shortName>
        </alternativeName>
        <alternativeName>
            <fullName>p15</fullName>
        </alternativeName>
    </component>
    <component>
        <recommendedName>
            <fullName>RNA-directed RNA polymerase nsp12</fullName>
            <shortName>Pol</shortName>
            <shortName>RdRp</shortName>
            <ecNumber>2.7.7.48</ecNumber>
            <ecNumber>2.7.7.50</ecNumber>
        </recommendedName>
        <alternativeName>
            <fullName>nsp12</fullName>
        </alternativeName>
        <alternativeName>
            <fullName>p100</fullName>
        </alternativeName>
    </component>
    <component>
        <recommendedName>
            <fullName>Helicase nsp13</fullName>
            <shortName>Hel</shortName>
            <ecNumber>3.6.4.12</ecNumber>
            <ecNumber>3.6.4.13</ecNumber>
        </recommendedName>
        <alternativeName>
            <fullName>nsp13</fullName>
        </alternativeName>
        <alternativeName>
            <fullName>p67</fullName>
        </alternativeName>
    </component>
    <component>
        <recommendedName>
            <fullName>Guanine-N7 methyltransferase nsp14</fullName>
            <shortName>ExoN</shortName>
            <ecNumber>2.1.1.56</ecNumber>
            <ecNumber>3.1.13.-</ecNumber>
        </recommendedName>
        <alternativeName>
            <fullName>nsp14</fullName>
        </alternativeName>
    </component>
    <component>
        <recommendedName>
            <fullName>Uridylate-specific endoribonuclease nsp15</fullName>
            <ecNumber>4.6.1.-</ecNumber>
        </recommendedName>
        <alternativeName>
            <fullName>NendoU</fullName>
        </alternativeName>
        <alternativeName>
            <fullName>nsp15</fullName>
        </alternativeName>
        <alternativeName>
            <fullName>p35</fullName>
        </alternativeName>
    </component>
    <component>
        <recommendedName>
            <fullName>2'-O-methyltransferase nsp16</fullName>
            <ecNumber>2.1.1.57</ecNumber>
        </recommendedName>
        <alternativeName>
            <fullName>nsp16</fullName>
        </alternativeName>
    </component>
</protein>
<keyword id="KW-1072">Activation of host autophagy by virus</keyword>
<keyword id="KW-0067">ATP-binding</keyword>
<keyword id="KW-1132">Decay of host mRNAs by virus</keyword>
<keyword id="KW-1015">Disulfide bond</keyword>
<keyword id="KW-0255">Endonuclease</keyword>
<keyword id="KW-1262">Eukaryotic host gene expression shutoff by virus</keyword>
<keyword id="KW-1193">Eukaryotic host translation shutoff by virus</keyword>
<keyword id="KW-0269">Exonuclease</keyword>
<keyword id="KW-0347">Helicase</keyword>
<keyword id="KW-1035">Host cytoplasm</keyword>
<keyword id="KW-1190">Host gene expression shutoff by virus</keyword>
<keyword id="KW-1043">Host membrane</keyword>
<keyword id="KW-1192">Host mRNA suppression by virus</keyword>
<keyword id="KW-0945">Host-virus interaction</keyword>
<keyword id="KW-0378">Hydrolase</keyword>
<keyword id="KW-1090">Inhibition of host innate immune response by virus</keyword>
<keyword id="KW-1114">Inhibition of host interferon signaling pathway by virus</keyword>
<keyword id="KW-1095">Inhibition of host ISG15 by virus</keyword>
<keyword id="KW-1100">Inhibition of host NF-kappa-B by virus</keyword>
<keyword id="KW-0922">Interferon antiviral system evasion</keyword>
<keyword id="KW-0456">Lyase</keyword>
<keyword id="KW-0464">Manganese</keyword>
<keyword id="KW-0472">Membrane</keyword>
<keyword id="KW-0479">Metal-binding</keyword>
<keyword id="KW-0489">Methyltransferase</keyword>
<keyword id="KW-1127">Modulation of host ubiquitin pathway by viral deubiquitinase</keyword>
<keyword id="KW-1130">Modulation of host ubiquitin pathway by virus</keyword>
<keyword id="KW-0540">Nuclease</keyword>
<keyword id="KW-0547">Nucleotide-binding</keyword>
<keyword id="KW-0548">Nucleotidyltransferase</keyword>
<keyword id="KW-0645">Protease</keyword>
<keyword id="KW-0677">Repeat</keyword>
<keyword id="KW-0688">Ribosomal frameshifting</keyword>
<keyword id="KW-0694">RNA-binding</keyword>
<keyword id="KW-0696">RNA-directed RNA polymerase</keyword>
<keyword id="KW-0788">Thiol protease</keyword>
<keyword id="KW-0808">Transferase</keyword>
<keyword id="KW-0812">Transmembrane</keyword>
<keyword id="KW-1133">Transmembrane helix</keyword>
<keyword id="KW-0833">Ubl conjugation pathway</keyword>
<keyword id="KW-0899">Viral immunoevasion</keyword>
<keyword id="KW-0693">Viral RNA replication</keyword>
<keyword id="KW-0862">Zinc</keyword>
<keyword id="KW-0863">Zinc-finger</keyword>
<evidence type="ECO:0000250" key="1"/>
<evidence type="ECO:0000250" key="2">
    <source>
        <dbReference type="UniProtKB" id="P0C6X7"/>
    </source>
</evidence>
<evidence type="ECO:0000250" key="3">
    <source>
        <dbReference type="UniProtKB" id="P0DTD1"/>
    </source>
</evidence>
<evidence type="ECO:0000255" key="4"/>
<evidence type="ECO:0000255" key="5">
    <source>
        <dbReference type="PROSITE-ProRule" id="PRU00214"/>
    </source>
</evidence>
<evidence type="ECO:0000255" key="6">
    <source>
        <dbReference type="PROSITE-ProRule" id="PRU00444"/>
    </source>
</evidence>
<evidence type="ECO:0000255" key="7">
    <source>
        <dbReference type="PROSITE-ProRule" id="PRU00490"/>
    </source>
</evidence>
<evidence type="ECO:0000255" key="8">
    <source>
        <dbReference type="PROSITE-ProRule" id="PRU00539"/>
    </source>
</evidence>
<evidence type="ECO:0000255" key="9">
    <source>
        <dbReference type="PROSITE-ProRule" id="PRU00772"/>
    </source>
</evidence>
<evidence type="ECO:0000255" key="10">
    <source>
        <dbReference type="PROSITE-ProRule" id="PRU00986"/>
    </source>
</evidence>
<evidence type="ECO:0000255" key="11">
    <source>
        <dbReference type="PROSITE-ProRule" id="PRU01289"/>
    </source>
</evidence>
<evidence type="ECO:0000255" key="12">
    <source>
        <dbReference type="PROSITE-ProRule" id="PRU01290"/>
    </source>
</evidence>
<evidence type="ECO:0000255" key="13">
    <source>
        <dbReference type="PROSITE-ProRule" id="PRU01291"/>
    </source>
</evidence>
<evidence type="ECO:0000255" key="14">
    <source>
        <dbReference type="PROSITE-ProRule" id="PRU01292"/>
    </source>
</evidence>
<evidence type="ECO:0000255" key="15">
    <source>
        <dbReference type="PROSITE-ProRule" id="PRU01293"/>
    </source>
</evidence>
<evidence type="ECO:0000255" key="16">
    <source>
        <dbReference type="PROSITE-ProRule" id="PRU01294"/>
    </source>
</evidence>
<evidence type="ECO:0000255" key="17">
    <source>
        <dbReference type="PROSITE-ProRule" id="PRU01295"/>
    </source>
</evidence>
<evidence type="ECO:0000255" key="18">
    <source>
        <dbReference type="PROSITE-ProRule" id="PRU01296"/>
    </source>
</evidence>
<evidence type="ECO:0000255" key="19">
    <source>
        <dbReference type="PROSITE-ProRule" id="PRU01297"/>
    </source>
</evidence>
<evidence type="ECO:0000255" key="20">
    <source>
        <dbReference type="PROSITE-ProRule" id="PRU01298"/>
    </source>
</evidence>
<evidence type="ECO:0000255" key="21">
    <source>
        <dbReference type="PROSITE-ProRule" id="PRU01299"/>
    </source>
</evidence>
<evidence type="ECO:0000255" key="22">
    <source>
        <dbReference type="PROSITE-ProRule" id="PRU01300"/>
    </source>
</evidence>
<evidence type="ECO:0000255" key="23">
    <source>
        <dbReference type="PROSITE-ProRule" id="PRU01303"/>
    </source>
</evidence>
<evidence type="ECO:0000255" key="24">
    <source>
        <dbReference type="PROSITE-ProRule" id="PRU01305"/>
    </source>
</evidence>
<evidence type="ECO:0000255" key="25">
    <source>
        <dbReference type="PROSITE-ProRule" id="PRU01306"/>
    </source>
</evidence>
<evidence type="ECO:0000255" key="26">
    <source>
        <dbReference type="PROSITE-ProRule" id="PRU01307"/>
    </source>
</evidence>
<evidence type="ECO:0000255" key="27">
    <source>
        <dbReference type="PROSITE-ProRule" id="PRU01308"/>
    </source>
</evidence>
<evidence type="ECO:0000255" key="28">
    <source>
        <dbReference type="PROSITE-ProRule" id="PRU01333"/>
    </source>
</evidence>
<evidence type="ECO:0000255" key="29">
    <source>
        <dbReference type="PROSITE-ProRule" id="PRU01334"/>
    </source>
</evidence>
<evidence type="ECO:0000255" key="30">
    <source>
        <dbReference type="PROSITE-ProRule" id="PRU01335"/>
    </source>
</evidence>
<evidence type="ECO:0000255" key="31">
    <source>
        <dbReference type="PROSITE-ProRule" id="PRU01336"/>
    </source>
</evidence>
<evidence type="ECO:0000255" key="32">
    <source>
        <dbReference type="PROSITE-ProRule" id="PRU01337"/>
    </source>
</evidence>
<evidence type="ECO:0000255" key="33">
    <source>
        <dbReference type="PROSITE-ProRule" id="PRU01338"/>
    </source>
</evidence>
<evidence type="ECO:0000255" key="34">
    <source>
        <dbReference type="PROSITE-ProRule" id="PRU01344"/>
    </source>
</evidence>
<evidence type="ECO:0000256" key="35">
    <source>
        <dbReference type="SAM" id="MobiDB-lite"/>
    </source>
</evidence>
<evidence type="ECO:0000305" key="36"/>
<organism>
    <name type="scientific">Bovine coronavirus (strain Quebec)</name>
    <name type="common">BCoV</name>
    <name type="synonym">BCV</name>
    <dbReference type="NCBI Taxonomy" id="11133"/>
    <lineage>
        <taxon>Viruses</taxon>
        <taxon>Riboviria</taxon>
        <taxon>Orthornavirae</taxon>
        <taxon>Pisuviricota</taxon>
        <taxon>Pisoniviricetes</taxon>
        <taxon>Nidovirales</taxon>
        <taxon>Cornidovirineae</taxon>
        <taxon>Coronaviridae</taxon>
        <taxon>Orthocoronavirinae</taxon>
        <taxon>Betacoronavirus</taxon>
        <taxon>Embecovirus</taxon>
        <taxon>Betacoronavirus 1</taxon>
    </lineage>
</organism>